<keyword id="KW-0002">3D-structure</keyword>
<keyword id="KW-0025">Alternative splicing</keyword>
<keyword id="KW-0106">Calcium</keyword>
<keyword id="KW-0130">Cell adhesion</keyword>
<keyword id="KW-1003">Cell membrane</keyword>
<keyword id="KW-0209">Deafness</keyword>
<keyword id="KW-0225">Disease variant</keyword>
<keyword id="KW-0325">Glycoprotein</keyword>
<keyword id="KW-1009">Hearing</keyword>
<keyword id="KW-0472">Membrane</keyword>
<keyword id="KW-0479">Metal-binding</keyword>
<keyword id="KW-1010">Non-syndromic deafness</keyword>
<keyword id="KW-1267">Proteomics identification</keyword>
<keyword id="KW-1185">Reference proteome</keyword>
<keyword id="KW-0677">Repeat</keyword>
<keyword id="KW-0682">Retinitis pigmentosa</keyword>
<keyword id="KW-0716">Sensory transduction</keyword>
<keyword id="KW-0732">Signal</keyword>
<keyword id="KW-0812">Transmembrane</keyword>
<keyword id="KW-1133">Transmembrane helix</keyword>
<keyword id="KW-0836">Usher syndrome</keyword>
<keyword id="KW-0844">Vision</keyword>
<proteinExistence type="evidence at protein level"/>
<protein>
    <recommendedName>
        <fullName evidence="25">Cadherin-23</fullName>
    </recommendedName>
    <alternativeName>
        <fullName evidence="30">Otocadherin</fullName>
    </alternativeName>
</protein>
<evidence type="ECO:0000250" key="1">
    <source>
        <dbReference type="UniProtKB" id="P12830"/>
    </source>
</evidence>
<evidence type="ECO:0000250" key="2">
    <source>
        <dbReference type="UniProtKB" id="Q99PF4"/>
    </source>
</evidence>
<evidence type="ECO:0000255" key="3"/>
<evidence type="ECO:0000255" key="4">
    <source>
        <dbReference type="PROSITE-ProRule" id="PRU00043"/>
    </source>
</evidence>
<evidence type="ECO:0000269" key="5">
    <source>
    </source>
</evidence>
<evidence type="ECO:0000269" key="6">
    <source>
    </source>
</evidence>
<evidence type="ECO:0000269" key="7">
    <source>
    </source>
</evidence>
<evidence type="ECO:0000269" key="8">
    <source>
    </source>
</evidence>
<evidence type="ECO:0000269" key="9">
    <source>
    </source>
</evidence>
<evidence type="ECO:0000269" key="10">
    <source>
    </source>
</evidence>
<evidence type="ECO:0000269" key="11">
    <source>
    </source>
</evidence>
<evidence type="ECO:0000269" key="12">
    <source>
    </source>
</evidence>
<evidence type="ECO:0000269" key="13">
    <source>
    </source>
</evidence>
<evidence type="ECO:0000269" key="14">
    <source>
    </source>
</evidence>
<evidence type="ECO:0000269" key="15">
    <source>
    </source>
</evidence>
<evidence type="ECO:0000269" key="16">
    <source>
    </source>
</evidence>
<evidence type="ECO:0000269" key="17">
    <source>
    </source>
</evidence>
<evidence type="ECO:0000269" key="18">
    <source>
    </source>
</evidence>
<evidence type="ECO:0000269" key="19">
    <source>
    </source>
</evidence>
<evidence type="ECO:0000269" key="20">
    <source>
    </source>
</evidence>
<evidence type="ECO:0000269" key="21">
    <source>
    </source>
</evidence>
<evidence type="ECO:0000269" key="22">
    <source>
    </source>
</evidence>
<evidence type="ECO:0000269" key="23">
    <source>
    </source>
</evidence>
<evidence type="ECO:0000269" key="24">
    <source>
    </source>
</evidence>
<evidence type="ECO:0000303" key="25">
    <source>
    </source>
</evidence>
<evidence type="ECO:0000303" key="26">
    <source>
    </source>
</evidence>
<evidence type="ECO:0000303" key="27">
    <source>
    </source>
</evidence>
<evidence type="ECO:0000303" key="28">
    <source>
    </source>
</evidence>
<evidence type="ECO:0000303" key="29">
    <source>
    </source>
</evidence>
<evidence type="ECO:0000303" key="30">
    <source>
    </source>
</evidence>
<evidence type="ECO:0000303" key="31">
    <source>
    </source>
</evidence>
<evidence type="ECO:0000305" key="32"/>
<evidence type="ECO:0000312" key="33">
    <source>
        <dbReference type="HGNC" id="HGNC:13733"/>
    </source>
</evidence>
<evidence type="ECO:0007829" key="34">
    <source>
        <dbReference type="PDB" id="2KBR"/>
    </source>
</evidence>
<evidence type="ECO:0007829" key="35">
    <source>
        <dbReference type="PDB" id="2KBS"/>
    </source>
</evidence>
<evidence type="ECO:0007829" key="36">
    <source>
        <dbReference type="PDB" id="2LSR"/>
    </source>
</evidence>
<evidence type="ECO:0007829" key="37">
    <source>
        <dbReference type="PDB" id="5TFM"/>
    </source>
</evidence>
<evidence type="ECO:0007829" key="38">
    <source>
        <dbReference type="PDB" id="5WJ8"/>
    </source>
</evidence>
<dbReference type="EMBL" id="AF312024">
    <property type="protein sequence ID" value="AAG48303.1"/>
    <property type="molecule type" value="mRNA"/>
</dbReference>
<dbReference type="EMBL" id="AY358617">
    <property type="protein sequence ID" value="AAQ88980.1"/>
    <property type="molecule type" value="mRNA"/>
</dbReference>
<dbReference type="EMBL" id="AY563161">
    <property type="protein sequence ID" value="AAT72161.1"/>
    <property type="molecule type" value="mRNA"/>
</dbReference>
<dbReference type="EMBL" id="AY563162">
    <property type="protein sequence ID" value="AAT72162.1"/>
    <property type="molecule type" value="mRNA"/>
</dbReference>
<dbReference type="EMBL" id="AY563165">
    <property type="protein sequence ID" value="AAT72165.1"/>
    <property type="molecule type" value="mRNA"/>
</dbReference>
<dbReference type="EMBL" id="AY563166">
    <property type="protein sequence ID" value="AAT72166.1"/>
    <property type="molecule type" value="mRNA"/>
</dbReference>
<dbReference type="EMBL" id="AC012469">
    <property type="status" value="NOT_ANNOTATED_CDS"/>
    <property type="molecule type" value="Genomic_DNA"/>
</dbReference>
<dbReference type="EMBL" id="AL359183">
    <property type="status" value="NOT_ANNOTATED_CDS"/>
    <property type="molecule type" value="Genomic_DNA"/>
</dbReference>
<dbReference type="EMBL" id="AL731541">
    <property type="status" value="NOT_ANNOTATED_CDS"/>
    <property type="molecule type" value="Genomic_DNA"/>
</dbReference>
<dbReference type="EMBL" id="AL772287">
    <property type="status" value="NOT_ANNOTATED_CDS"/>
    <property type="molecule type" value="Genomic_DNA"/>
</dbReference>
<dbReference type="EMBL" id="BC011570">
    <property type="protein sequence ID" value="AAH11570.1"/>
    <property type="molecule type" value="mRNA"/>
</dbReference>
<dbReference type="EMBL" id="BC136976">
    <property type="protein sequence ID" value="AAI36977.1"/>
    <property type="molecule type" value="mRNA"/>
</dbReference>
<dbReference type="EMBL" id="BC136977">
    <property type="protein sequence ID" value="AAI36978.1"/>
    <property type="molecule type" value="mRNA"/>
</dbReference>
<dbReference type="EMBL" id="AB058715">
    <property type="protein sequence ID" value="BAB47441.1"/>
    <property type="molecule type" value="mRNA"/>
</dbReference>
<dbReference type="EMBL" id="AY010111">
    <property type="protein sequence ID" value="AAG27034.2"/>
    <property type="molecule type" value="mRNA"/>
</dbReference>
<dbReference type="EMBL" id="AB053445">
    <property type="protein sequence ID" value="BAB61902.1"/>
    <property type="molecule type" value="mRNA"/>
</dbReference>
<dbReference type="CCDS" id="CCDS44429.1">
    <molecule id="Q9H251-5"/>
</dbReference>
<dbReference type="CCDS" id="CCDS53540.1">
    <molecule id="Q9H251-7"/>
</dbReference>
<dbReference type="CCDS" id="CCDS73146.1">
    <molecule id="Q9H251-9"/>
</dbReference>
<dbReference type="CCDS" id="CCDS86100.1">
    <molecule id="Q9H251-1"/>
</dbReference>
<dbReference type="RefSeq" id="NP_001165401.1">
    <property type="nucleotide sequence ID" value="NM_001171930.1"/>
</dbReference>
<dbReference type="RefSeq" id="NP_001165402.1">
    <property type="nucleotide sequence ID" value="NM_001171931.1"/>
</dbReference>
<dbReference type="RefSeq" id="NP_001165403.1">
    <property type="nucleotide sequence ID" value="NM_001171932.1"/>
</dbReference>
<dbReference type="RefSeq" id="NP_001165404.1">
    <molecule id="Q9H251-7"/>
    <property type="nucleotide sequence ID" value="NM_001171933.1"/>
</dbReference>
<dbReference type="RefSeq" id="NP_001165405.1">
    <molecule id="Q9H251-9"/>
    <property type="nucleotide sequence ID" value="NM_001171934.1"/>
</dbReference>
<dbReference type="RefSeq" id="NP_001165406.1">
    <molecule id="Q9H251-10"/>
    <property type="nucleotide sequence ID" value="NM_001171935.1"/>
</dbReference>
<dbReference type="RefSeq" id="NP_001165407.1">
    <molecule id="Q9H251-11"/>
    <property type="nucleotide sequence ID" value="NM_001171936.1"/>
</dbReference>
<dbReference type="RefSeq" id="NP_071407.4">
    <molecule id="Q9H251-1"/>
    <property type="nucleotide sequence ID" value="NM_022124.5"/>
</dbReference>
<dbReference type="RefSeq" id="NP_443068.1">
    <molecule id="Q9H251-5"/>
    <property type="nucleotide sequence ID" value="NM_052836.4"/>
</dbReference>
<dbReference type="RefSeq" id="XP_016871997.1">
    <property type="nucleotide sequence ID" value="XM_017016508.1"/>
</dbReference>
<dbReference type="PDB" id="2KBR">
    <property type="method" value="NMR"/>
    <property type="chains" value="B=3183-3200"/>
</dbReference>
<dbReference type="PDB" id="2KBS">
    <property type="method" value="NMR"/>
    <property type="chains" value="B=3347-3354"/>
</dbReference>
<dbReference type="PDB" id="2LSR">
    <property type="method" value="NMR"/>
    <property type="chains" value="B=3212-3227"/>
</dbReference>
<dbReference type="PDB" id="5TFM">
    <property type="method" value="X-ray"/>
    <property type="resolution" value="2.92 A"/>
    <property type="chains" value="A=557-886"/>
</dbReference>
<dbReference type="PDB" id="5VVM">
    <property type="method" value="X-ray"/>
    <property type="resolution" value="3.54 A"/>
    <property type="chains" value="A/B=2169-2505"/>
</dbReference>
<dbReference type="PDB" id="5WJ8">
    <property type="method" value="X-ray"/>
    <property type="resolution" value="1.86 A"/>
    <property type="chains" value="A=1307-1523"/>
</dbReference>
<dbReference type="PDBsum" id="2KBR"/>
<dbReference type="PDBsum" id="2KBS"/>
<dbReference type="PDBsum" id="2LSR"/>
<dbReference type="PDBsum" id="5TFM"/>
<dbReference type="PDBsum" id="5VVM"/>
<dbReference type="PDBsum" id="5WJ8"/>
<dbReference type="SMR" id="Q9H251"/>
<dbReference type="BioGRID" id="122042">
    <property type="interactions" value="67"/>
</dbReference>
<dbReference type="CORUM" id="Q9H251"/>
<dbReference type="DIP" id="DIP-48786N"/>
<dbReference type="ELM" id="Q9H251"/>
<dbReference type="FunCoup" id="Q9H251">
    <property type="interactions" value="80"/>
</dbReference>
<dbReference type="IntAct" id="Q9H251">
    <property type="interactions" value="63"/>
</dbReference>
<dbReference type="MINT" id="Q9H251"/>
<dbReference type="STRING" id="9606.ENSP00000224721"/>
<dbReference type="GlyConnect" id="2025">
    <property type="glycosylation" value="1 N-Linked glycan (1 site)"/>
</dbReference>
<dbReference type="GlyCosmos" id="Q9H251">
    <property type="glycosylation" value="41 sites, 2 glycans"/>
</dbReference>
<dbReference type="GlyGen" id="Q9H251">
    <property type="glycosylation" value="42 sites, 3 N-linked glycans (2 sites), 1 O-linked glycan (1 site)"/>
</dbReference>
<dbReference type="iPTMnet" id="Q9H251"/>
<dbReference type="PhosphoSitePlus" id="Q9H251"/>
<dbReference type="BioMuta" id="CDH23"/>
<dbReference type="DMDM" id="408359994"/>
<dbReference type="MassIVE" id="Q9H251"/>
<dbReference type="PaxDb" id="9606-ENSP00000381768"/>
<dbReference type="PeptideAtlas" id="Q9H251"/>
<dbReference type="ProteomicsDB" id="27994"/>
<dbReference type="ProteomicsDB" id="80489">
    <molecule id="Q9H251-1"/>
</dbReference>
<dbReference type="ProteomicsDB" id="80490">
    <molecule id="Q9H251-2"/>
</dbReference>
<dbReference type="ProteomicsDB" id="80491">
    <molecule id="Q9H251-3"/>
</dbReference>
<dbReference type="ProteomicsDB" id="80492">
    <molecule id="Q9H251-4"/>
</dbReference>
<dbReference type="ProteomicsDB" id="80493">
    <molecule id="Q9H251-5"/>
</dbReference>
<dbReference type="ProteomicsDB" id="80494">
    <molecule id="Q9H251-6"/>
</dbReference>
<dbReference type="Antibodypedia" id="2330">
    <property type="antibodies" value="267 antibodies from 34 providers"/>
</dbReference>
<dbReference type="DNASU" id="64072"/>
<dbReference type="Ensembl" id="ENST00000224721.12">
    <molecule id="Q9H251-1"/>
    <property type="protein sequence ID" value="ENSP00000224721.9"/>
    <property type="gene ID" value="ENSG00000107736.22"/>
</dbReference>
<dbReference type="Ensembl" id="ENST00000398788.4">
    <molecule id="Q9H251-7"/>
    <property type="protein sequence ID" value="ENSP00000381768.3"/>
    <property type="gene ID" value="ENSG00000107736.22"/>
</dbReference>
<dbReference type="Ensembl" id="ENST00000461841.7">
    <molecule id="Q9H251-5"/>
    <property type="protein sequence ID" value="ENSP00000473454.2"/>
    <property type="gene ID" value="ENSG00000107736.22"/>
</dbReference>
<dbReference type="Ensembl" id="ENST00000619887.4">
    <molecule id="Q9H251-9"/>
    <property type="protein sequence ID" value="ENSP00000478374.1"/>
    <property type="gene ID" value="ENSG00000107736.22"/>
</dbReference>
<dbReference type="GeneID" id="64072"/>
<dbReference type="KEGG" id="hsa:64072"/>
<dbReference type="MANE-Select" id="ENST00000224721.12">
    <property type="protein sequence ID" value="ENSP00000224721.9"/>
    <property type="RefSeq nucleotide sequence ID" value="NM_022124.6"/>
    <property type="RefSeq protein sequence ID" value="NP_071407.4"/>
</dbReference>
<dbReference type="UCSC" id="uc001jsg.5">
    <molecule id="Q9H251-1"/>
    <property type="organism name" value="human"/>
</dbReference>
<dbReference type="AGR" id="HGNC:13733"/>
<dbReference type="CTD" id="64072"/>
<dbReference type="DisGeNET" id="64072"/>
<dbReference type="GeneCards" id="CDH23"/>
<dbReference type="GeneReviews" id="CDH23"/>
<dbReference type="HGNC" id="HGNC:13733">
    <property type="gene designation" value="CDH23"/>
</dbReference>
<dbReference type="HPA" id="ENSG00000107736">
    <property type="expression patterns" value="Tissue enhanced (ovary)"/>
</dbReference>
<dbReference type="MalaCards" id="CDH23"/>
<dbReference type="MIM" id="276900">
    <property type="type" value="phenotype"/>
</dbReference>
<dbReference type="MIM" id="601067">
    <property type="type" value="phenotype"/>
</dbReference>
<dbReference type="MIM" id="601386">
    <property type="type" value="phenotype"/>
</dbReference>
<dbReference type="MIM" id="605516">
    <property type="type" value="gene"/>
</dbReference>
<dbReference type="MIM" id="617540">
    <property type="type" value="phenotype"/>
</dbReference>
<dbReference type="neXtProt" id="NX_Q9H251"/>
<dbReference type="OpenTargets" id="ENSG00000107736"/>
<dbReference type="Orphanet" id="96253">
    <property type="disease" value="Cushing disease"/>
</dbReference>
<dbReference type="Orphanet" id="314777">
    <property type="disease" value="Familial isolated pituitary adenoma"/>
</dbReference>
<dbReference type="Orphanet" id="2965">
    <property type="disease" value="Prolactinoma"/>
</dbReference>
<dbReference type="Orphanet" id="90636">
    <property type="disease" value="Rare autosomal recessive non-syndromic sensorineural deafness type DFNB"/>
</dbReference>
<dbReference type="Orphanet" id="91347">
    <property type="disease" value="TSH-secreting pituitary adenoma"/>
</dbReference>
<dbReference type="Orphanet" id="231169">
    <property type="disease" value="Usher syndrome type 1"/>
</dbReference>
<dbReference type="PharmGKB" id="PA26296"/>
<dbReference type="VEuPathDB" id="HostDB:ENSG00000107736"/>
<dbReference type="eggNOG" id="KOG3594">
    <property type="taxonomic scope" value="Eukaryota"/>
</dbReference>
<dbReference type="GeneTree" id="ENSGT00940000155245"/>
<dbReference type="HOGENOM" id="CLU_275423_0_0_1"/>
<dbReference type="InParanoid" id="Q9H251"/>
<dbReference type="OMA" id="ITRPSHH"/>
<dbReference type="OrthoDB" id="9990384at2759"/>
<dbReference type="PAN-GO" id="Q9H251">
    <property type="GO annotations" value="4 GO annotations based on evolutionary models"/>
</dbReference>
<dbReference type="TreeFam" id="TF320624"/>
<dbReference type="PathwayCommons" id="Q9H251"/>
<dbReference type="Reactome" id="R-HSA-9662360">
    <property type="pathway name" value="Sensory processing of sound by inner hair cells of the cochlea"/>
</dbReference>
<dbReference type="Reactome" id="R-HSA-9662361">
    <property type="pathway name" value="Sensory processing of sound by outer hair cells of the cochlea"/>
</dbReference>
<dbReference type="SignaLink" id="Q9H251"/>
<dbReference type="SIGNOR" id="Q9H251"/>
<dbReference type="BioGRID-ORCS" id="64072">
    <property type="hits" value="13 hits in 1141 CRISPR screens"/>
</dbReference>
<dbReference type="ChiTaRS" id="CDH23">
    <property type="organism name" value="human"/>
</dbReference>
<dbReference type="EvolutionaryTrace" id="Q9H251"/>
<dbReference type="GeneWiki" id="CDH23"/>
<dbReference type="GenomeRNAi" id="64072"/>
<dbReference type="Pharos" id="Q9H251">
    <property type="development level" value="Tbio"/>
</dbReference>
<dbReference type="PRO" id="PR:Q9H251"/>
<dbReference type="Proteomes" id="UP000005640">
    <property type="component" value="Chromosome 10"/>
</dbReference>
<dbReference type="RNAct" id="Q9H251">
    <property type="molecule type" value="protein"/>
</dbReference>
<dbReference type="Bgee" id="ENSG00000107736">
    <property type="expression patterns" value="Expressed in ventricular zone and 101 other cell types or tissues"/>
</dbReference>
<dbReference type="ExpressionAtlas" id="Q9H251">
    <property type="expression patterns" value="baseline and differential"/>
</dbReference>
<dbReference type="GO" id="GO:0016342">
    <property type="term" value="C:catenin complex"/>
    <property type="evidence" value="ECO:0000318"/>
    <property type="project" value="GO_Central"/>
</dbReference>
<dbReference type="GO" id="GO:0005813">
    <property type="term" value="C:centrosome"/>
    <property type="evidence" value="ECO:0007669"/>
    <property type="project" value="Ensembl"/>
</dbReference>
<dbReference type="GO" id="GO:0098683">
    <property type="term" value="C:cochlear hair cell ribbon synapse"/>
    <property type="evidence" value="ECO:0007669"/>
    <property type="project" value="Ensembl"/>
</dbReference>
<dbReference type="GO" id="GO:0060091">
    <property type="term" value="C:kinocilium"/>
    <property type="evidence" value="ECO:0007669"/>
    <property type="project" value="Ensembl"/>
</dbReference>
<dbReference type="GO" id="GO:0016020">
    <property type="term" value="C:membrane"/>
    <property type="evidence" value="ECO:0000303"/>
    <property type="project" value="UniProtKB"/>
</dbReference>
<dbReference type="GO" id="GO:0001917">
    <property type="term" value="C:photoreceptor inner segment"/>
    <property type="evidence" value="ECO:0007669"/>
    <property type="project" value="Ensembl"/>
</dbReference>
<dbReference type="GO" id="GO:0098684">
    <property type="term" value="C:photoreceptor ribbon synapse"/>
    <property type="evidence" value="ECO:0007669"/>
    <property type="project" value="Ensembl"/>
</dbReference>
<dbReference type="GO" id="GO:0032420">
    <property type="term" value="C:stereocilium"/>
    <property type="evidence" value="ECO:0000250"/>
    <property type="project" value="HGNC-UCL"/>
</dbReference>
<dbReference type="GO" id="GO:0032426">
    <property type="term" value="C:stereocilium tip"/>
    <property type="evidence" value="ECO:0007669"/>
    <property type="project" value="Ensembl"/>
</dbReference>
<dbReference type="GO" id="GO:0008013">
    <property type="term" value="F:beta-catenin binding"/>
    <property type="evidence" value="ECO:0000318"/>
    <property type="project" value="GO_Central"/>
</dbReference>
<dbReference type="GO" id="GO:0045296">
    <property type="term" value="F:cadherin binding"/>
    <property type="evidence" value="ECO:0000318"/>
    <property type="project" value="GO_Central"/>
</dbReference>
<dbReference type="GO" id="GO:0005509">
    <property type="term" value="F:calcium ion binding"/>
    <property type="evidence" value="ECO:0007669"/>
    <property type="project" value="InterPro"/>
</dbReference>
<dbReference type="GO" id="GO:0060088">
    <property type="term" value="P:auditory receptor cell stereocilium organization"/>
    <property type="evidence" value="ECO:0007669"/>
    <property type="project" value="Ensembl"/>
</dbReference>
<dbReference type="GO" id="GO:0006816">
    <property type="term" value="P:calcium ion transport"/>
    <property type="evidence" value="ECO:0000315"/>
    <property type="project" value="DFLAT"/>
</dbReference>
<dbReference type="GO" id="GO:0016339">
    <property type="term" value="P:calcium-dependent cell-cell adhesion via plasma membrane cell adhesion molecules"/>
    <property type="evidence" value="ECO:0000303"/>
    <property type="project" value="UniProtKB"/>
</dbReference>
<dbReference type="GO" id="GO:0016477">
    <property type="term" value="P:cell migration"/>
    <property type="evidence" value="ECO:0000318"/>
    <property type="project" value="GO_Central"/>
</dbReference>
<dbReference type="GO" id="GO:0098742">
    <property type="term" value="P:cell-cell adhesion via plasma-membrane adhesion molecules"/>
    <property type="evidence" value="ECO:0000318"/>
    <property type="project" value="GO_Central"/>
</dbReference>
<dbReference type="GO" id="GO:0090102">
    <property type="term" value="P:cochlea development"/>
    <property type="evidence" value="ECO:0007669"/>
    <property type="project" value="Ensembl"/>
</dbReference>
<dbReference type="GO" id="GO:0050957">
    <property type="term" value="P:equilibrioception"/>
    <property type="evidence" value="ECO:0000315"/>
    <property type="project" value="HGNC-UCL"/>
</dbReference>
<dbReference type="GO" id="GO:0007156">
    <property type="term" value="P:homophilic cell adhesion via plasma membrane adhesion molecules"/>
    <property type="evidence" value="ECO:0007669"/>
    <property type="project" value="InterPro"/>
</dbReference>
<dbReference type="GO" id="GO:0007626">
    <property type="term" value="P:locomotory behavior"/>
    <property type="evidence" value="ECO:0007669"/>
    <property type="project" value="Ensembl"/>
</dbReference>
<dbReference type="GO" id="GO:0031175">
    <property type="term" value="P:neuron projection development"/>
    <property type="evidence" value="ECO:0000318"/>
    <property type="project" value="GO_Central"/>
</dbReference>
<dbReference type="GO" id="GO:0045494">
    <property type="term" value="P:photoreceptor cell maintenance"/>
    <property type="evidence" value="ECO:0000315"/>
    <property type="project" value="HGNC-UCL"/>
</dbReference>
<dbReference type="GO" id="GO:0051480">
    <property type="term" value="P:regulation of cytosolic calcium ion concentration"/>
    <property type="evidence" value="ECO:0000315"/>
    <property type="project" value="DFLAT"/>
</dbReference>
<dbReference type="GO" id="GO:0050953">
    <property type="term" value="P:sensory perception of light stimulus"/>
    <property type="evidence" value="ECO:0000315"/>
    <property type="project" value="HGNC-UCL"/>
</dbReference>
<dbReference type="GO" id="GO:0007605">
    <property type="term" value="P:sensory perception of sound"/>
    <property type="evidence" value="ECO:0000315"/>
    <property type="project" value="MGI"/>
</dbReference>
<dbReference type="GO" id="GO:0007601">
    <property type="term" value="P:visual perception"/>
    <property type="evidence" value="ECO:0007669"/>
    <property type="project" value="UniProtKB-KW"/>
</dbReference>
<dbReference type="CDD" id="cd11304">
    <property type="entry name" value="Cadherin_repeat"/>
    <property type="match status" value="27"/>
</dbReference>
<dbReference type="FunFam" id="2.60.40.60:FF:000141">
    <property type="entry name" value="Cadherin 23"/>
    <property type="match status" value="1"/>
</dbReference>
<dbReference type="FunFam" id="2.60.40.60:FF:000142">
    <property type="entry name" value="Cadherin 23"/>
    <property type="match status" value="1"/>
</dbReference>
<dbReference type="FunFam" id="2.60.40.60:FF:000147">
    <property type="entry name" value="Cadherin 23"/>
    <property type="match status" value="1"/>
</dbReference>
<dbReference type="FunFam" id="2.60.40.60:FF:000173">
    <property type="entry name" value="Cadherin 23"/>
    <property type="match status" value="2"/>
</dbReference>
<dbReference type="FunFam" id="2.60.40.60:FF:000203">
    <property type="entry name" value="Cadherin 23"/>
    <property type="match status" value="1"/>
</dbReference>
<dbReference type="FunFam" id="2.60.40.60:FF:000228">
    <property type="entry name" value="Cadherin 23"/>
    <property type="match status" value="1"/>
</dbReference>
<dbReference type="FunFam" id="2.60.40.60:FF:000393">
    <property type="entry name" value="Cadherin-23"/>
    <property type="match status" value="1"/>
</dbReference>
<dbReference type="FunFam" id="2.60.40.60:FF:000098">
    <property type="entry name" value="cadherin-23 isoform X1"/>
    <property type="match status" value="1"/>
</dbReference>
<dbReference type="FunFam" id="2.60.40.60:FF:000104">
    <property type="entry name" value="cadherin-23 isoform X1"/>
    <property type="match status" value="1"/>
</dbReference>
<dbReference type="FunFam" id="2.60.40.60:FF:000130">
    <property type="entry name" value="cadherin-23 isoform X1"/>
    <property type="match status" value="1"/>
</dbReference>
<dbReference type="FunFam" id="2.60.40.60:FF:000135">
    <property type="entry name" value="cadherin-23 isoform X1"/>
    <property type="match status" value="1"/>
</dbReference>
<dbReference type="FunFam" id="2.60.40.60:FF:000146">
    <property type="entry name" value="cadherin-23 isoform X1"/>
    <property type="match status" value="1"/>
</dbReference>
<dbReference type="FunFam" id="2.60.40.60:FF:000155">
    <property type="entry name" value="cadherin-23 isoform X1"/>
    <property type="match status" value="1"/>
</dbReference>
<dbReference type="FunFam" id="2.60.40.60:FF:000156">
    <property type="entry name" value="cadherin-23 isoform X1"/>
    <property type="match status" value="1"/>
</dbReference>
<dbReference type="FunFam" id="2.60.40.60:FF:000160">
    <property type="entry name" value="cadherin-23 isoform X1"/>
    <property type="match status" value="1"/>
</dbReference>
<dbReference type="FunFam" id="2.60.40.60:FF:000164">
    <property type="entry name" value="cadherin-23 isoform X1"/>
    <property type="match status" value="1"/>
</dbReference>
<dbReference type="FunFam" id="2.60.40.60:FF:000166">
    <property type="entry name" value="cadherin-23 isoform X1"/>
    <property type="match status" value="1"/>
</dbReference>
<dbReference type="FunFam" id="2.60.40.60:FF:000172">
    <property type="entry name" value="cadherin-23 isoform X1"/>
    <property type="match status" value="1"/>
</dbReference>
<dbReference type="FunFam" id="2.60.40.60:FF:000175">
    <property type="entry name" value="cadherin-23 isoform X1"/>
    <property type="match status" value="1"/>
</dbReference>
<dbReference type="FunFam" id="2.60.40.60:FF:000206">
    <property type="entry name" value="cadherin-23 isoform X1"/>
    <property type="match status" value="1"/>
</dbReference>
<dbReference type="FunFam" id="2.60.40.60:FF:000020">
    <property type="entry name" value="Dachsous cadherin-related 1b"/>
    <property type="match status" value="1"/>
</dbReference>
<dbReference type="FunFam" id="2.60.40.60:FF:000100">
    <property type="entry name" value="protocadherin Fat 2"/>
    <property type="match status" value="1"/>
</dbReference>
<dbReference type="FunFam" id="2.60.40.60:FF:000060">
    <property type="entry name" value="Putative cadherin-23"/>
    <property type="match status" value="3"/>
</dbReference>
<dbReference type="FunFam" id="2.60.40.60:FF:000807">
    <property type="entry name" value="Uncharacterized protein"/>
    <property type="match status" value="1"/>
</dbReference>
<dbReference type="Gene3D" id="2.60.40.60">
    <property type="entry name" value="Cadherins"/>
    <property type="match status" value="27"/>
</dbReference>
<dbReference type="InterPro" id="IPR002126">
    <property type="entry name" value="Cadherin-like_dom"/>
</dbReference>
<dbReference type="InterPro" id="IPR015919">
    <property type="entry name" value="Cadherin-like_sf"/>
</dbReference>
<dbReference type="InterPro" id="IPR020894">
    <property type="entry name" value="Cadherin_CS"/>
</dbReference>
<dbReference type="PANTHER" id="PTHR24026">
    <property type="entry name" value="FAT ATYPICAL CADHERIN-RELATED"/>
    <property type="match status" value="1"/>
</dbReference>
<dbReference type="PANTHER" id="PTHR24026:SF136">
    <property type="entry name" value="PROTOCADHERIN-23"/>
    <property type="match status" value="1"/>
</dbReference>
<dbReference type="Pfam" id="PF00028">
    <property type="entry name" value="Cadherin"/>
    <property type="match status" value="24"/>
</dbReference>
<dbReference type="PRINTS" id="PR00205">
    <property type="entry name" value="CADHERIN"/>
</dbReference>
<dbReference type="SMART" id="SM00112">
    <property type="entry name" value="CA"/>
    <property type="match status" value="26"/>
</dbReference>
<dbReference type="SUPFAM" id="SSF49313">
    <property type="entry name" value="Cadherin-like"/>
    <property type="match status" value="27"/>
</dbReference>
<dbReference type="PROSITE" id="PS00232">
    <property type="entry name" value="CADHERIN_1"/>
    <property type="match status" value="17"/>
</dbReference>
<dbReference type="PROSITE" id="PS50268">
    <property type="entry name" value="CADHERIN_2"/>
    <property type="match status" value="27"/>
</dbReference>
<sequence length="3354" mass="369494">MGRHVATSCHVAWLLVLISGCWGQVNRLPFFTNHFFDTYLLISEDTPVGSSVTQLLAQDMDNDPLVFGVSGEEASRFFAVEPDTGVVWLRQPLDRETKSEFTVEFSVSDHQGVITRKVNIQVGDVNDNAPTFHNQPYSVRIPENTPVGTPIFIVNATDPDLGAGGSVLYSFQPPSQFFAIDSARGIVTVIRELDYETTQAYQLTVNATDQDKTRPLSTLANLAIIITDVQDMDPIFINLPYSTNIYEHSPPGTTVRIITAIDQDKGRPRGIGYTIVSGNTNSIFALDYISGVLTLNGLLDRENPLYSHGFILTVKGTELNDDRTPSDATVTTTFNILVIDINDNAPEFNSSEYSVAITELAQVGFALPLFIQVVDKDENLGLNSMFEVYLVGNNSHHFIISPTSVQGKADIRIRVAIPLDYETVDRYDFDLFANESVPDHVGYAKVKITLINENDNRPIFSQPLYNISLYENVTVGTSVLTVLATDNDAGTFGEVSYFFSDDPDRFSLDKDTGLIMLIARLDYELIQRFTLTIIARDGGGEETTGRVRINVLDVNDNVPTFQKDAYVGALRENEPSVTQLVRLRATDEDSPPNNQITYSIVSASAFGSYFDISLYEGYGVISVSRPLDYEQISNGLIYLTVMAMDAGNPPLNSTVPVTIEVFDENDNPPTFSKPAYFVSVVENIMAGATVLFLNATDLDRSREYGQESIIYSLEGSTQFRINARSGEITTTSLLDRETKSEYILIVRAVDGGVGHNQKTGIATVNITLLDINDNHPTWKDAPYYINLVEMTPPDSDVTTVVAVDPDLGENGTLVYSIQPPNKFYSLNSTTGKIRTTHAMLDRENPDPHEAELMRKIVVSVTDCGRPPLKATSSATVFVNLLDLNDNDPTFQNLPFVAEVLEGIPAGVSIYQVVAIDLDEGLNGLVSYRMPVGMPRMDFLINSSSGVVVTTTELDRERIAEYQLRVVASDAGTPTKSSTSTLTIHVLDVNDETPTFFPAVYNVSVSEDVPREFRVVWLNCTDNDVGLNAELSYFITGGNVDGKFSVGYRDAVVRTVVGLDRETTAAYMLILEAIDNGPVGKRHTGTATVFVTVLDVNDNRPIFLQSSYEASVPEDIPEGHSILQLKATDADEGEFGRVWYRILHGNHGNNFRIHVSNGLLMRGPRPLDRERNSSHVLIVEAYNHDLGPMRSSVRVIVYVEDINDEAPVFTQQQYSRLGLRETAGIGTSVIVVQATDRDSGDGGLVNYRILSGAEGKFEIDESTGLIITVNYLDYETKTSYMMNVSATDQAPPFNQGFCSVYITLLNELDEAVQFSNASYEAAILENLALGTEIVRVQAYSIDNLNQITYRFNAYTSTQAKALFKIDAITGVITVQGLVDREKGDFYTLTVVADDGGPKVDSTVKVYITVLDENDNSPRFDFTSDSAVSIPEDCPVGQRVATVKAWDPDAGSNGQVVFSLASGNIAGAFEIVTTNDSIGEVFVARPLDREELDHYILQVVASDRGTPPRKKDHILQVTILDINDNPPVIESPFGYNVSVNENVGGGTAVVQVRATDRDIGINSVLSYYITEGNKDMAFRMDRISGEIATRPAPPDRERQSFYHLVATVEDEGTPTLSATTHVYVTIVDENDNAPMFQQPHYEVLLDEGPDTLNTSLITIQALDLDEGPNGTVTYAIVAGNIVNTFRIDRHMGVITAAKELDYEISHGRYTLIVTATDQCPILSHRLTSTTTVLVNVNDINDNVPTFPRDYEGPFEVTEGQPGPRVWTFLAHDRDSGPNGQVEYSIMDGDPLGEFVISPVEGVLRVRKDVELDRETIAFYNLTICARDRGMPPLSSTMLVGIRVLDINDNDPVLLNLPMNITISENSPVSSFVAHVLASDADSGCNARLTFNITAGNRERAFFINATTGIVTVNRPLDRERIPEYKLTISVKDNPENPRIARRDYDLLLIFLSDENDNHPLFTKSTYQAEVMENSPAGTPLTVLNGPILALDADQDIYAVVTYQLLGAQSGLFDINSSTGVVTVRSGVIIDREAFSPPILELLLLAEDIGLLNSTAHLLITILDDNDNRPTFSPATLTVHLLENCPPGFSVLQVTATDEDSGLNGELVYRIEAGAQDRFLIHLVTGVIRVGNATIDREEQESYRLTVVATDRGTVPLSGTAIVTILIDDINDSRPEFLNPIQTVSVLESAEPGTVIANITAIDHDLNPKLEYHIVGIVAKDDTDRLVPNQEDAFAVNINTGSVMVKSPMNRELVATYEVTLSVIDNASDLPERSVSVPNAKLTVNVLDVNDNTPQFKPFGITYYMERILEGATPGTTLIAVAAVDPDKGLNGLVTYTLLDLVPPGYVQLEDSSAGKVIANRTVDYEEVHWLNFTVRASDNGSPPRAAEIPVYLEIVDINDNNPIFDQPSYQEAVFEDVPVGTIILTVTATDADSGNFALIEYSLGDGESKFAINPTTGDIYVLSSLDREKKDHYILTALAKDNPGDVASNRRENSVQVVIQVLDVNDCRPQFSKPQFSTSVYENEPAGTSVITMMATDQDEGPNGELTYSLEGPGVEAFHVDMDSGLVTTQRPLQSYEKFSLTVVATDGGEPPLWGTTMLLVEVIDVNDNRPVFVRPPNGTILHIREEIPLRSNVYEVYATDKDEGLNGAVRYSFLKTAGNRDWEFFIIDPISGLIQTAQRLDRESQAVYSLILVASDLGQPVPYETMQPLQVALEDIDDNEPLFVRPPKGSPQYQLLTVPEHSPRGTLVGNVTGAVDADEGPNAIVYYFIAAGNEEKNFHLQPDGCLLVLRDLDREREAIFSFIVKASSNRSWTPPRGPSPTLDLVADLTLQEVRVVLEDINDQPPRFTKAEYTAGVATDAKVGSELIQVLALDADIGNNSLVFYSILAIHYFRALANDSEDVGQVFTMGSMDGILRTFDLFMAYSPGYFVVDIVARDLAGHNDTAIIGIYILRDDQRVKIVINEIPDRVRGFEEEFIHLLSNITGAIVNTDNVQFHVDKKGRVNFAQTELLIHVVNRDTNRILDVDRVIQMIDENKEQLRNLFRNYNVLDVQPAISVRLPDDMSALQMAIIVLAILLFLAAMLFVLMNWYYRTVHKRKLKAIVAGSAGNRGFIDIMDMPNTNKYSFDGANPVWLDPFCRNLELAAQAEHEDDLPENLSEIADLWNSPTRTHGTFGREPAAVKPDDDRYLRAAIQEYDNIAKLGQIIREGPIKGSLLKVVLEDYLRLKKLFAQRMVQKASSCHSSISELIQTELDEEPGDHSPGQGSLRFRHKPPVELKGPDGIHVVHGSTGTLLATDLNSLPEEDQKGLGRSLETLTAAEATAFERNARTESAKSTPLHKLRDVIMETPLEITEL</sequence>
<feature type="signal peptide" evidence="3">
    <location>
        <begin position="1"/>
        <end position="23"/>
    </location>
</feature>
<feature type="chain" id="PRO_0000003824" description="Cadherin-23">
    <location>
        <begin position="24"/>
        <end position="3354"/>
    </location>
</feature>
<feature type="topological domain" description="Extracellular" evidence="3">
    <location>
        <begin position="24"/>
        <end position="3064"/>
    </location>
</feature>
<feature type="transmembrane region" description="Helical" evidence="3">
    <location>
        <begin position="3065"/>
        <end position="3085"/>
    </location>
</feature>
<feature type="topological domain" description="Cytoplasmic" evidence="3">
    <location>
        <begin position="3086"/>
        <end position="3354"/>
    </location>
</feature>
<feature type="domain" description="Cadherin 1" evidence="4">
    <location>
        <begin position="34"/>
        <end position="132"/>
    </location>
</feature>
<feature type="domain" description="Cadherin 2" evidence="4">
    <location>
        <begin position="133"/>
        <end position="236"/>
    </location>
</feature>
<feature type="domain" description="Cadherin 3" evidence="4">
    <location>
        <begin position="237"/>
        <end position="348"/>
    </location>
</feature>
<feature type="domain" description="Cadherin 4" evidence="4">
    <location>
        <begin position="349"/>
        <end position="460"/>
    </location>
</feature>
<feature type="domain" description="Cadherin 5" evidence="4">
    <location>
        <begin position="461"/>
        <end position="561"/>
    </location>
</feature>
<feature type="domain" description="Cadherin 6" evidence="4">
    <location>
        <begin position="562"/>
        <end position="671"/>
    </location>
</feature>
<feature type="domain" description="Cadherin 7" evidence="4">
    <location>
        <begin position="672"/>
        <end position="784"/>
    </location>
</feature>
<feature type="domain" description="Cadherin 8" evidence="4">
    <location>
        <begin position="779"/>
        <end position="890"/>
    </location>
</feature>
<feature type="domain" description="Cadherin 9" evidence="4">
    <location>
        <begin position="891"/>
        <end position="995"/>
    </location>
</feature>
<feature type="domain" description="Cadherin 10" evidence="4">
    <location>
        <begin position="996"/>
        <end position="1102"/>
    </location>
</feature>
<feature type="domain" description="Cadherin 11" evidence="4">
    <location>
        <begin position="1103"/>
        <end position="1208"/>
    </location>
</feature>
<feature type="domain" description="Cadherin 12" evidence="4">
    <location>
        <begin position="1210"/>
        <end position="1313"/>
    </location>
</feature>
<feature type="domain" description="Cadherin 13" evidence="4">
    <location>
        <begin position="1314"/>
        <end position="1418"/>
    </location>
</feature>
<feature type="domain" description="Cadherin 14" evidence="4">
    <location>
        <begin position="1420"/>
        <end position="1527"/>
    </location>
</feature>
<feature type="domain" description="Cadherin 15" evidence="4">
    <location>
        <begin position="1529"/>
        <end position="1634"/>
    </location>
</feature>
<feature type="domain" description="Cadherin 16" evidence="4">
    <location>
        <begin position="1635"/>
        <end position="1744"/>
    </location>
</feature>
<feature type="domain" description="Cadherin 17" evidence="4">
    <location>
        <begin position="1745"/>
        <end position="1851"/>
    </location>
</feature>
<feature type="domain" description="Cadherin 18" evidence="4">
    <location>
        <begin position="1852"/>
        <end position="1959"/>
    </location>
</feature>
<feature type="domain" description="Cadherin 19" evidence="4">
    <location>
        <begin position="1960"/>
        <end position="2069"/>
    </location>
</feature>
<feature type="domain" description="Cadherin 20" evidence="4">
    <location>
        <begin position="2070"/>
        <end position="2174"/>
    </location>
</feature>
<feature type="domain" description="Cadherin 21" evidence="4">
    <location>
        <begin position="2175"/>
        <end position="2293"/>
    </location>
</feature>
<feature type="domain" description="Cadherin 22" evidence="4">
    <location>
        <begin position="2297"/>
        <end position="2402"/>
    </location>
</feature>
<feature type="domain" description="Cadherin 23" evidence="4">
    <location>
        <begin position="2403"/>
        <end position="2509"/>
    </location>
</feature>
<feature type="domain" description="Cadherin 24" evidence="4">
    <location>
        <begin position="2510"/>
        <end position="2611"/>
    </location>
</feature>
<feature type="domain" description="Cadherin 25" evidence="4">
    <location>
        <begin position="2614"/>
        <end position="2722"/>
    </location>
</feature>
<feature type="domain" description="Cadherin 26" evidence="4">
    <location>
        <begin position="2729"/>
        <end position="2846"/>
    </location>
</feature>
<feature type="domain" description="Cadherin 27" evidence="4">
    <location>
        <begin position="2847"/>
        <end position="2975"/>
    </location>
</feature>
<feature type="glycosylation site" description="N-linked (GlcNAc...) asparagine" evidence="3">
    <location>
        <position position="155"/>
    </location>
</feature>
<feature type="glycosylation site" description="N-linked (GlcNAc...) asparagine" evidence="3">
    <location>
        <position position="206"/>
    </location>
</feature>
<feature type="glycosylation site" description="N-linked (GlcNAc...) asparagine" evidence="3">
    <location>
        <position position="349"/>
    </location>
</feature>
<feature type="glycosylation site" description="N-linked (GlcNAc...) asparagine" evidence="3">
    <location>
        <position position="393"/>
    </location>
</feature>
<feature type="glycosylation site" description="N-linked (GlcNAc...) asparagine" evidence="3">
    <location>
        <position position="434"/>
    </location>
</feature>
<feature type="glycosylation site" description="N-linked (GlcNAc...) asparagine" evidence="3">
    <location>
        <position position="466"/>
    </location>
</feature>
<feature type="glycosylation site" description="N-linked (GlcNAc...) asparagine" evidence="3">
    <location>
        <position position="472"/>
    </location>
</feature>
<feature type="glycosylation site" description="N-linked (GlcNAc...) asparagine" evidence="3">
    <location>
        <position position="652"/>
    </location>
</feature>
<feature type="glycosylation site" description="N-linked (GlcNAc...) asparagine" evidence="3">
    <location>
        <position position="694"/>
    </location>
</feature>
<feature type="glycosylation site" description="N-linked (GlcNAc...) asparagine" evidence="3">
    <location>
        <position position="765"/>
    </location>
</feature>
<feature type="glycosylation site" description="N-linked (GlcNAc...) asparagine" evidence="3">
    <location>
        <position position="810"/>
    </location>
</feature>
<feature type="glycosylation site" description="N-linked (GlcNAc...) asparagine" evidence="3">
    <location>
        <position position="827"/>
    </location>
</feature>
<feature type="glycosylation site" description="N-linked (GlcNAc...) asparagine" evidence="3">
    <location>
        <position position="941"/>
    </location>
</feature>
<feature type="glycosylation site" description="N-linked (GlcNAc...) asparagine" evidence="3">
    <location>
        <position position="1001"/>
    </location>
</feature>
<feature type="glycosylation site" description="N-linked (GlcNAc...) asparagine" evidence="3">
    <location>
        <position position="1018"/>
    </location>
</feature>
<feature type="glycosylation site" description="N-linked (GlcNAc...) asparagine" evidence="3">
    <location>
        <position position="1171"/>
    </location>
</feature>
<feature type="glycosylation site" description="N-linked (GlcNAc...) asparagine" evidence="3">
    <location>
        <position position="1282"/>
    </location>
</feature>
<feature type="glycosylation site" description="N-linked (GlcNAc...) asparagine" evidence="3">
    <location>
        <position position="1315"/>
    </location>
</feature>
<feature type="glycosylation site" description="N-linked (GlcNAc...) asparagine" evidence="3">
    <location>
        <position position="1473"/>
    </location>
</feature>
<feature type="glycosylation site" description="N-linked (GlcNAc...) asparagine" evidence="3">
    <location>
        <position position="1534"/>
    </location>
</feature>
<feature type="glycosylation site" description="N-linked (GlcNAc...) asparagine" evidence="3">
    <location>
        <position position="1651"/>
    </location>
</feature>
<feature type="glycosylation site" description="N-linked (GlcNAc...) asparagine" evidence="3">
    <location>
        <position position="1667"/>
    </location>
</feature>
<feature type="glycosylation site" description="N-linked (GlcNAc...) asparagine" evidence="3">
    <location>
        <position position="1818"/>
    </location>
</feature>
<feature type="glycosylation site" description="N-linked (GlcNAc...) asparagine" evidence="3">
    <location>
        <position position="1857"/>
    </location>
</feature>
<feature type="glycosylation site" description="N-linked (GlcNAc...) asparagine" evidence="3">
    <location>
        <position position="1889"/>
    </location>
</feature>
<feature type="glycosylation site" description="N-linked (GlcNAc...) asparagine" evidence="3">
    <location>
        <position position="1902"/>
    </location>
</feature>
<feature type="glycosylation site" description="N-linked (GlcNAc...) asparagine" evidence="3">
    <location>
        <position position="2013"/>
    </location>
</feature>
<feature type="glycosylation site" description="N-linked (GlcNAc...) asparagine" evidence="3">
    <location>
        <position position="2050"/>
    </location>
</feature>
<feature type="glycosylation site" description="N-linked (GlcNAc...) asparagine" evidence="3">
    <location>
        <position position="2129"/>
    </location>
</feature>
<feature type="glycosylation site" description="N-linked (GlcNAc...) asparagine" evidence="3">
    <location>
        <position position="2168"/>
    </location>
</feature>
<feature type="glycosylation site" description="N-linked (GlcNAc...) asparagine" evidence="3">
    <location>
        <position position="2195"/>
    </location>
</feature>
<feature type="glycosylation site" description="N-linked (GlcNAc...) asparagine" evidence="3">
    <location>
        <position position="2263"/>
    </location>
</feature>
<feature type="glycosylation site" description="N-linked (GlcNAc...) asparagine" evidence="3">
    <location>
        <position position="2357"/>
    </location>
</feature>
<feature type="glycosylation site" description="N-linked (GlcNAc...) asparagine" evidence="3">
    <location>
        <position position="2369"/>
    </location>
</feature>
<feature type="glycosylation site" description="N-linked (GlcNAc...) asparagine" evidence="3">
    <location>
        <position position="2616"/>
    </location>
</feature>
<feature type="glycosylation site" description="N-linked (GlcNAc...) asparagine" evidence="3">
    <location>
        <position position="2749"/>
    </location>
</feature>
<feature type="glycosylation site" description="N-linked (GlcNAc...) asparagine" evidence="3">
    <location>
        <position position="2808"/>
    </location>
</feature>
<feature type="glycosylation site" description="N-linked (GlcNAc...) asparagine" evidence="3">
    <location>
        <position position="2877"/>
    </location>
</feature>
<feature type="glycosylation site" description="N-linked (GlcNAc...) asparagine" evidence="3">
    <location>
        <position position="2896"/>
    </location>
</feature>
<feature type="glycosylation site" description="N-linked (GlcNAc...) asparagine" evidence="3">
    <location>
        <position position="2941"/>
    </location>
</feature>
<feature type="glycosylation site" description="N-linked (GlcNAc...) asparagine" evidence="3">
    <location>
        <position position="2981"/>
    </location>
</feature>
<feature type="splice variant" id="VSP_044260" description="In isoform 7 and isoform 9." evidence="31">
    <location>
        <begin position="1"/>
        <end position="2240"/>
    </location>
</feature>
<feature type="splice variant" id="VSP_047923" description="In isoform 10 and isoform 11." evidence="31">
    <original>MGRHVATSCHVAWLLVLISGCWGQ</original>
    <variation>MRSWFQQDPMVGACTTGTRASHPK</variation>
    <location>
        <begin position="1"/>
        <end position="24"/>
    </location>
</feature>
<feature type="splice variant" id="VSP_047924" description="In isoform 10 and isoform 11." evidence="31">
    <location>
        <begin position="25"/>
        <end position="3127"/>
    </location>
</feature>
<feature type="splice variant" id="VSP_044261" description="In isoform 8." evidence="32">
    <original>E</original>
    <variation>EVGATG</variation>
    <location>
        <position position="143"/>
    </location>
</feature>
<feature type="splice variant" id="VSP_000645" description="In isoform 2 and isoform 8." evidence="32">
    <location>
        <begin position="379"/>
        <end position="380"/>
    </location>
</feature>
<feature type="splice variant" id="VSP_013268" description="In isoform 5." evidence="28 29">
    <original>ATDNDAGTFGEVSYFFSDDPDRFSLDKDTGLIMLIARLDYELIQRFT</original>
    <variation>VSPRFTAGPLSSPGPTVVRHPEGFCPRDLSNQGRRHPQIPELCLLVY</variation>
    <location>
        <begin position="484"/>
        <end position="530"/>
    </location>
</feature>
<feature type="splice variant" id="VSP_013269" description="In isoform 5." evidence="28 29">
    <location>
        <begin position="531"/>
        <end position="3354"/>
    </location>
</feature>
<feature type="splice variant" id="VSP_035289" description="In isoform 6." evidence="26">
    <original>LKATDADEGEFGRVWYRILHGNHGNNFRIHVSNGLLMRGPRPLDRERNSSHVLIVEAYNHDLGPMRSSVRVIVYVEDINDEAPVFTQQQ</original>
    <variation>EEDLASPCISPAPPRRAFQSSGEKETSQFPGKELRREPGPSKAQNRAAFTEPLAEAPLLGSKQAQEERAPLPREQAQQLQGSEGEKGGP</variation>
    <location>
        <begin position="1124"/>
        <end position="1212"/>
    </location>
</feature>
<feature type="splice variant" id="VSP_035290" description="In isoform 6." evidence="26">
    <location>
        <begin position="1213"/>
        <end position="3354"/>
    </location>
</feature>
<feature type="splice variant" id="VSP_000646" description="In isoform 3." evidence="32">
    <location>
        <position position="1403"/>
    </location>
</feature>
<feature type="splice variant" id="VSP_000647" description="In isoform 4, isoform 9 and isoform 11." evidence="27 31">
    <location>
        <begin position="3212"/>
        <end position="3246"/>
    </location>
</feature>
<feature type="sequence variant" id="VAR_012166" description="In dbSNP:rs7902757." evidence="6 8 10">
    <original>R</original>
    <variation>C</variation>
    <location>
        <position position="3"/>
    </location>
</feature>
<feature type="sequence variant" id="VAR_027317" description="In DFNB12; dbSNP:rs751192273." evidence="8">
    <original>D</original>
    <variation>G</variation>
    <location>
        <position position="124"/>
    </location>
</feature>
<feature type="sequence variant" id="VAR_071407" description="In dbSNP:rs1057519500." evidence="20">
    <original>D</original>
    <variation>N</variation>
    <location>
        <position position="160"/>
    </location>
</feature>
<feature type="sequence variant" id="VAR_079747" description="In dbSNP:rs369624952." evidence="24">
    <original>V</original>
    <variation>I</variation>
    <location>
        <position position="187"/>
    </location>
</feature>
<feature type="sequence variant" id="VAR_072661" description="In dbSNP:rs199514829." evidence="22">
    <original>E</original>
    <variation>Q</variation>
    <location>
        <position position="192"/>
    </location>
</feature>
<feature type="sequence variant" id="VAR_046404" description="In DFNB12; dbSNP:rs121908354." evidence="16 20 21">
    <original>P</original>
    <variation>L</variation>
    <location>
        <position position="240"/>
    </location>
</feature>
<feature type="sequence variant" id="VAR_027318" description="In USH1D." evidence="14">
    <original>E</original>
    <variation>K</variation>
    <location>
        <position position="247"/>
    </location>
</feature>
<feature type="sequence variant" id="VAR_046405" description="In DFNB12; uncertain significance; dbSNP:rs121908355." evidence="16 20">
    <original>R</original>
    <variation>Q</variation>
    <location>
        <position position="301"/>
    </location>
</feature>
<feature type="sequence variant" id="VAR_071408" description="In DFNB12; dbSNP:rs1451062499." evidence="21">
    <original>N</original>
    <variation>S</variation>
    <location>
        <position position="342"/>
    </location>
</feature>
<feature type="sequence variant" id="VAR_071409" description="In dbSNP:rs774524441." evidence="21">
    <original>A</original>
    <variation>S</variation>
    <location>
        <position position="361"/>
    </location>
</feature>
<feature type="sequence variant" id="VAR_024030" description="In USH1D; benign; dbSNP:rs143282422." evidence="12 17">
    <original>A</original>
    <variation>T</variation>
    <location>
        <position position="366"/>
    </location>
</feature>
<feature type="sequence variant" id="VAR_071410" description="In dbSNP:rs2305207." evidence="21">
    <original>V</original>
    <variation>M</variation>
    <location>
        <position position="424"/>
    </location>
</feature>
<feature type="sequence variant" id="VAR_071411" description="In dbSNP:rs188376296." evidence="21">
    <original>D</original>
    <variation>N</variation>
    <location>
        <position position="428"/>
    </location>
</feature>
<feature type="sequence variant" id="VAR_027319" description="In DFNB12; dbSNP:rs375646885." evidence="8">
    <original>N</original>
    <variation>S</variation>
    <location>
        <position position="452"/>
    </location>
</feature>
<feature type="sequence variant" id="VAR_027320" description="In DFNB12; dbSNP:rs767928788." evidence="8">
    <original>L</original>
    <variation>Q</variation>
    <location>
        <position position="480"/>
    </location>
</feature>
<feature type="sequence variant" id="VAR_027321" description="In USH1D." evidence="8">
    <original>A</original>
    <variation>P</variation>
    <location>
        <position position="484"/>
    </location>
</feature>
<feature type="sequence variant" id="VAR_012167" description="In dbSNP:rs1227049." evidence="6 8 17 21">
    <original>G</original>
    <variation>A</variation>
    <location>
        <position position="490"/>
    </location>
</feature>
<feature type="sequence variant" id="VAR_012168" description="In dbSNP:rs10999947." evidence="6 7 8 17 21">
    <original>S</original>
    <variation>N</variation>
    <location>
        <position position="496"/>
    </location>
</feature>
<feature type="sequence variant" id="VAR_027322" description="In DFNB12; dbSNP:rs200263980." evidence="8">
    <original>R</original>
    <variation>Q</variation>
    <location>
        <position position="582"/>
    </location>
</feature>
<feature type="sequence variant" id="VAR_046406" description="In dbSNP:rs550384315." evidence="17">
    <original>V</original>
    <variation>I</variation>
    <location>
        <position position="746"/>
    </location>
</feature>
<feature type="sequence variant" id="VAR_046407" description="In USH1D; benign; dbSNP:rs181255269." evidence="17">
    <original>H</original>
    <variation>Y</variation>
    <location>
        <position position="755"/>
    </location>
</feature>
<feature type="sequence variant" id="VAR_071412" description="In dbSNP:rs1865607601." evidence="20">
    <original>V</original>
    <variation>I</variation>
    <location>
        <position position="803"/>
    </location>
</feature>
<feature type="sequence variant" id="VAR_046408" description="In dbSNP:rs188098974." evidence="17">
    <original>S</original>
    <variation>G</variation>
    <location>
        <position position="944"/>
    </location>
</feature>
<feature type="sequence variant" id="VAR_071413" description="In DFNB12; dbSNP:rs756147087." evidence="20">
    <original>E</original>
    <variation>K</variation>
    <location>
        <position position="956"/>
    </location>
</feature>
<feature type="sequence variant" id="VAR_046409" description="In dbSNP:rs111033458." evidence="17">
    <original>E</original>
    <variation>K</variation>
    <location>
        <position position="960"/>
    </location>
</feature>
<feature type="sequence variant" id="VAR_071414" description="In dbSNP:rs376560330." evidence="21">
    <original>R</original>
    <variation>Q</variation>
    <location>
        <position position="964"/>
    </location>
</feature>
<feature type="sequence variant" id="VAR_012169" description="In DFNB12; dbSNP:rs771766431." evidence="5">
    <original>D</original>
    <variation>N</variation>
    <location>
        <position position="990"/>
    </location>
</feature>
<feature type="sequence variant" id="VAR_071415" description="In dbSNP:rs370107953." evidence="21">
    <original>R</original>
    <variation>H</variation>
    <location>
        <position position="1010"/>
    </location>
</feature>
<feature type="sequence variant" id="VAR_027323" description="In DFNB12; dbSNP:rs201536811." evidence="8 14">
    <original>R</original>
    <variation>W</variation>
    <location>
        <position position="1060"/>
    </location>
</feature>
<feature type="sequence variant" id="VAR_046410" description="In USH1D; dbSNP:rs368487578." evidence="17">
    <original>V</original>
    <variation>I</variation>
    <location>
        <position position="1090"/>
    </location>
</feature>
<feature type="sequence variant" id="VAR_046411" description="In USH1D; dbSNP:rs41281310." evidence="17">
    <original>N</original>
    <variation>S</variation>
    <location>
        <position position="1098"/>
    </location>
</feature>
<feature type="sequence variant" id="VAR_071416" description="In dbSNP:rs562052236." evidence="21">
    <original>G</original>
    <variation>S</variation>
    <location>
        <position position="1118"/>
    </location>
</feature>
<feature type="sequence variant" id="VAR_027324" description="In DFNB12; dbSNP:rs2132805690." evidence="8">
    <original>G</original>
    <variation>D</variation>
    <location>
        <position position="1186"/>
    </location>
</feature>
<feature type="sequence variant" id="VAR_027325" description="In USH1D." evidence="8">
    <original>P</original>
    <variation>R</variation>
    <location>
        <position position="1206"/>
    </location>
</feature>
<feature type="sequence variant" id="VAR_024031" description="In USH1D; benign; dbSNP:rs41281314." evidence="8 12">
    <original>T</original>
    <variation>A</variation>
    <location>
        <position position="1209"/>
    </location>
</feature>
<feature type="sequence variant" id="VAR_012170" description="In dbSNP:rs41281316." evidence="6 8 17">
    <original>A</original>
    <variation>T</variation>
    <location>
        <position position="1222"/>
    </location>
</feature>
<feature type="sequence variant" id="VAR_046412" description="In dbSNP:rs186990940." evidence="17">
    <original>R</original>
    <variation>Q</variation>
    <location>
        <position position="1236"/>
    </location>
</feature>
<feature type="sequence variant" id="VAR_012171" description="In USH1D." evidence="6">
    <location>
        <position position="1281"/>
    </location>
</feature>
<feature type="sequence variant" id="VAR_046413" description="In dbSNP:rs149073355." evidence="17">
    <original>N</original>
    <variation>S</variation>
    <location>
        <position position="1282"/>
    </location>
</feature>
<feature type="sequence variant" id="VAR_071417" description="In dbSNP:rs1364542092." evidence="21">
    <original>V</original>
    <variation>A</variation>
    <location>
        <position position="1335"/>
    </location>
</feature>
<feature type="sequence variant" id="VAR_027326" description="In DFNB12; dbSNP:rs121908351." evidence="9">
    <original>D</original>
    <variation>N</variation>
    <location>
        <position position="1341"/>
    </location>
</feature>
<feature type="sequence variant" id="VAR_012172" description="In dbSNP:rs41281318." evidence="6 17">
    <original>R</original>
    <variation>C</variation>
    <location>
        <position position="1349"/>
    </location>
</feature>
<feature type="sequence variant" id="VAR_012173" description="In dbSNP:rs1227065." evidence="5 6 17 21">
    <original>N</original>
    <variation>D</variation>
    <location>
        <position position="1351"/>
    </location>
</feature>
<feature type="sequence variant" id="VAR_071418" description="In DFNB12; dbSNP:rs762247872." evidence="20">
    <original>T</original>
    <variation>M</variation>
    <location>
        <position position="1368"/>
    </location>
</feature>
<feature type="sequence variant" id="VAR_080381" description="In PITA5; dbSNP:rs767004225." evidence="23">
    <original>R</original>
    <variation>L</variation>
    <location>
        <position position="1379"/>
    </location>
</feature>
<feature type="sequence variant" id="VAR_071419" evidence="20">
    <original>S</original>
    <variation>I</variation>
    <location>
        <position position="1415"/>
    </location>
</feature>
<feature type="sequence variant" id="VAR_046414" description="In DFNB12; dbSNP:rs756231829." evidence="16 20">
    <original>R</original>
    <variation>W</variation>
    <location>
        <position position="1417"/>
    </location>
</feature>
<feature type="sequence variant" id="VAR_027327" description="In dbSNP:rs56181447." evidence="8 17 21">
    <original>R</original>
    <variation>Q</variation>
    <location>
        <position position="1437"/>
    </location>
</feature>
<feature type="sequence variant" id="VAR_071420" description="In dbSNP:rs1839637016." evidence="20">
    <original>A</original>
    <variation>G</variation>
    <location>
        <position position="1443"/>
    </location>
</feature>
<feature type="sequence variant" id="VAR_012174" description="In USH1D; dbSNP:rs121908347." evidence="6 17">
    <original>Q</original>
    <variation>H</variation>
    <location>
        <position position="1496"/>
    </location>
</feature>
<feature type="sequence variant" id="VAR_024032" description="In USH1D; dbSNP:rs373480195." evidence="12">
    <original>R</original>
    <variation>Q</variation>
    <location>
        <position position="1507"/>
    </location>
</feature>
<feature type="sequence variant" id="VAR_046415" evidence="17">
    <original>I</original>
    <variation>M</variation>
    <location>
        <position position="1520"/>
    </location>
</feature>
<feature type="sequence variant" id="VAR_046416" description="In dbSNP:rs1564769834." evidence="17">
    <original>M</original>
    <variation>T</variation>
    <location>
        <position position="1574"/>
    </location>
</feature>
<feature type="sequence variant" id="VAR_012175" description="In dbSNP:rs1227051." evidence="5 6 21">
    <original>A</original>
    <variation>T</variation>
    <location>
        <position position="1575"/>
    </location>
</feature>
<feature type="sequence variant" id="VAR_027328" description="In DFNB12; dbSNP:rs573737471." evidence="8">
    <original>A</original>
    <variation>P</variation>
    <location>
        <position position="1586"/>
    </location>
</feature>
<feature type="sequence variant" id="VAR_071421" description="In dbSNP:rs137937502." evidence="20 21">
    <original>R</original>
    <variation>W</variation>
    <location>
        <position position="1588"/>
    </location>
</feature>
<feature type="sequence variant" id="VAR_027329" description="In DFNB12; dbSNP:rs778204574." evidence="8 21">
    <original>E</original>
    <variation>K</variation>
    <location>
        <position position="1595"/>
    </location>
</feature>
<feature type="sequence variant" id="VAR_027330" description="In dbSNP:rs41281330." evidence="8">
    <original>V</original>
    <variation>M</variation>
    <location>
        <position position="1620"/>
    </location>
</feature>
<feature type="sequence variant" id="VAR_071422" description="In DFNB12; dbSNP:rs1554871816." evidence="20">
    <original>D</original>
    <variation>A</variation>
    <location>
        <position position="1626"/>
    </location>
</feature>
<feature type="sequence variant" id="VAR_012176" description="In dbSNP:rs749678546." evidence="6">
    <original>T</original>
    <variation>S</variation>
    <location>
        <position position="1671"/>
    </location>
</feature>
<feature type="sequence variant" id="VAR_012177" description="In dbSNP:rs17712523." evidence="6 8 17 21">
    <original>V</original>
    <variation>I</variation>
    <location>
        <position position="1675"/>
    </location>
</feature>
<feature type="sequence variant" id="VAR_046417" description="In dbSNP:rs181611778." evidence="16 20">
    <original>V</original>
    <variation>I</variation>
    <location>
        <position position="1711"/>
    </location>
</feature>
<feature type="sequence variant" id="VAR_046418" description="In DFNB12; dbSNP:rs758382198." evidence="16 20">
    <original>Q</original>
    <variation>P</variation>
    <location>
        <position position="1716"/>
    </location>
</feature>
<feature type="sequence variant" id="VAR_012178" description="In USH1D; mild retinal affection; dbSNP:rs111033270." evidence="6">
    <original>R</original>
    <variation>Q</variation>
    <location>
        <position position="1746"/>
    </location>
</feature>
<feature type="sequence variant" id="VAR_046419" description="In USH1D; dbSNP:rs564555435." evidence="17">
    <original>P</original>
    <variation>L</variation>
    <location>
        <position position="1788"/>
    </location>
</feature>
<feature type="sequence variant" id="VAR_012179" description="In dbSNP:rs3802711." evidence="6 8 21">
    <original>R</original>
    <variation>Q</variation>
    <location>
        <position position="1804"/>
    </location>
</feature>
<feature type="sequence variant" id="VAR_071423" description="In dbSNP:rs74145660." evidence="21 24">
    <original>D</original>
    <variation>E</variation>
    <location>
        <position position="1806"/>
    </location>
</feature>
<feature type="sequence variant" id="VAR_046420" description="In dbSNP:rs143993990." evidence="16 20">
    <original>V</original>
    <variation>M</variation>
    <location>
        <position position="1807"/>
    </location>
</feature>
<feature type="sequence variant" id="VAR_027331" description="In DFNB12; dbSNP:rs746323558." evidence="8">
    <original>D</original>
    <variation>N</variation>
    <location>
        <position position="1846"/>
    </location>
</feature>
<feature type="sequence variant" id="VAR_046421" description="In dbSNP:rs983665281." evidence="16 20">
    <original>S</original>
    <variation>N</variation>
    <location>
        <position position="1876"/>
    </location>
</feature>
<feature type="sequence variant" id="VAR_027332" description="In dbSNP:rs397517340." evidence="8">
    <original>T</original>
    <variation>I</variation>
    <location>
        <position position="1887"/>
    </location>
</feature>
<feature type="sequence variant" id="VAR_027333" description="In DFNB12; dbSNP:rs121908352." evidence="13">
    <original>F</original>
    <variation>S</variation>
    <location>
        <position position="1888"/>
    </location>
</feature>
<feature type="sequence variant" id="VAR_046422" description="In dbSNP:rs368828743." evidence="16 20">
    <original>V</original>
    <variation>I</variation>
    <location>
        <position position="1908"/>
    </location>
</feature>
<feature type="sequence variant" id="VAR_046423" description="In USH1D; dbSNP:rs397517344." evidence="17">
    <original>R</original>
    <variation>W</variation>
    <location>
        <position position="1912"/>
    </location>
</feature>
<feature type="sequence variant" id="VAR_046424" description="In USH1D." evidence="17">
    <original>D</original>
    <variation>N</variation>
    <location>
        <position position="1930"/>
    </location>
</feature>
<feature type="sequence variant" id="VAR_012180" description="In dbSNP:rs11592462." evidence="6 8 15 17 21">
    <original>T</original>
    <variation>S</variation>
    <location>
        <position position="1999"/>
    </location>
</feature>
<feature type="sequence variant" id="VAR_027334" description="In USH1D; most likely affects splicing; dbSNP:rs183431253." evidence="14 17">
    <original>G</original>
    <variation>S</variation>
    <location>
        <position position="2017"/>
    </location>
</feature>
<feature type="sequence variant" id="VAR_046425" description="In DFNB12; dbSNP:rs750880909." evidence="16 20">
    <original>R</original>
    <variation>W</variation>
    <location>
        <position position="2029"/>
    </location>
</feature>
<feature type="sequence variant" id="VAR_012181" description="In dbSNP:rs10466026." evidence="6 8 21">
    <original>E</original>
    <variation>K</variation>
    <location>
        <position position="2044"/>
    </location>
</feature>
<feature type="sequence variant" id="VAR_012182" description="In DFNB12; dbSNP:rs121908348." evidence="5">
    <original>D</original>
    <variation>N</variation>
    <location>
        <position position="2045"/>
    </location>
</feature>
<feature type="sequence variant" id="VAR_027335" description="In dbSNP:rs201887949." evidence="8">
    <original>R</original>
    <variation>Q</variation>
    <location>
        <position position="2066"/>
    </location>
</feature>
<feature type="sequence variant" id="VAR_080382" description="In PITA5; uncertain significance; dbSNP:rs1270566026." evidence="23">
    <original>R</original>
    <variation>H</variation>
    <location>
        <position position="2115"/>
    </location>
</feature>
<feature type="sequence variant" id="VAR_046426" description="In dbSNP:rs16929354.">
    <original>I</original>
    <variation>M</variation>
    <location>
        <position position="2125"/>
    </location>
</feature>
<feature type="sequence variant" id="VAR_071424" description="In dbSNP:rs2132953541." evidence="20">
    <original>A</original>
    <variation>V</variation>
    <location>
        <position position="2130"/>
    </location>
</feature>
<feature type="sequence variant" id="VAR_027336" description="In DFNB12; dbSNP:rs111033271." evidence="9">
    <original>D</original>
    <variation>N</variation>
    <location>
        <position position="2148"/>
    </location>
</feature>
<feature type="sequence variant" id="VAR_046427" description="In dbSNP:rs781698111." evidence="16 20">
    <original>R</original>
    <variation>C</variation>
    <location>
        <position position="2171"/>
    </location>
</feature>
<feature type="sequence variant" id="VAR_012183" description="In DFNB12; dbSNP:rs121908349." evidence="5">
    <original>D</original>
    <variation>N</variation>
    <location>
        <position position="2202"/>
    </location>
</feature>
<feature type="sequence variant" id="VAR_046428" description="In dbSNP:rs778453484." evidence="16 20">
    <original>Q</original>
    <variation>P</variation>
    <location>
        <position position="2227"/>
    </location>
</feature>
<feature type="sequence variant" id="VAR_027337" description="In dbSNP:rs41281334." evidence="8 9 16 17 21">
    <original>V</original>
    <variation>I</variation>
    <location>
        <position position="2283"/>
    </location>
</feature>
<feature type="sequence variant" id="VAR_071425" description="In DFNB12." evidence="20">
    <original>N</original>
    <variation>K</variation>
    <location>
        <position position="2287"/>
    </location>
</feature>
<feature type="sequence variant" id="VAR_012184" description="In dbSNP:rs4747194." evidence="6 8 9 21">
    <original>R</original>
    <variation>Q</variation>
    <location>
        <position position="2358"/>
    </location>
</feature>
<feature type="sequence variant" id="VAR_027338" description="In dbSNP:rs9663920.">
    <original>D</original>
    <variation>N</variation>
    <location>
        <position position="2376"/>
    </location>
</feature>
<feature type="sequence variant" id="VAR_046429" description="In USH1D." evidence="17">
    <original>D</original>
    <variation>V</variation>
    <location>
        <position position="2376"/>
    </location>
</feature>
<feature type="sequence variant" id="VAR_012185" description="In dbSNP:rs4747195." evidence="6 8 9 17 21">
    <original>P</original>
    <variation>L</variation>
    <location>
        <position position="2380"/>
    </location>
</feature>
<feature type="sequence variant" id="VAR_071426" description="In DFNB12; dbSNP:rs1264310782." evidence="20">
    <original>E</original>
    <variation>K</variation>
    <location>
        <position position="2438"/>
    </location>
</feature>
<feature type="sequence variant" id="VAR_027339" description="In DFNB12; dbSNP:rs760879110." evidence="8">
    <original>R</original>
    <variation>W</variation>
    <location>
        <position position="2465"/>
    </location>
</feature>
<feature type="sequence variant" id="VAR_046430" description="In dbSNP:rs1589429497." evidence="16 20">
    <original>L</original>
    <variation>P</variation>
    <location>
        <position position="2473"/>
    </location>
</feature>
<feature type="sequence variant" id="VAR_046431" description="In dbSNP:rs141986620." evidence="16">
    <original>R</original>
    <variation>H</variation>
    <location>
        <position position="2489"/>
    </location>
</feature>
<feature type="sequence variant" id="VAR_027340" description="In USH1D; dbSNP:rs759093040." evidence="8">
    <original>S</original>
    <variation>G</variation>
    <location>
        <position position="2517"/>
    </location>
</feature>
<feature type="sequence variant" id="VAR_046432" description="In USH1D; dbSNP:rs781406146." evidence="17">
    <original>T</original>
    <variation>I</variation>
    <location>
        <position position="2530"/>
    </location>
</feature>
<feature type="sequence variant" id="VAR_071427" description="In dbSNP:rs569138025." evidence="21">
    <original>M</original>
    <variation>V</variation>
    <location>
        <position position="2531"/>
    </location>
</feature>
<feature type="sequence variant" id="VAR_012186" description="In dbSNP:rs41281338." evidence="6 8 17">
    <original>E</original>
    <variation>Q</variation>
    <location>
        <position position="2588"/>
    </location>
</feature>
<feature type="sequence variant" id="VAR_027341" description="In DFNB12; dbSNP:rs202052174." evidence="8">
    <original>R</original>
    <variation>H</variation>
    <location>
        <position position="2608"/>
    </location>
</feature>
<feature type="sequence variant" id="VAR_046433" description="In dbSNP:rs1841701549." evidence="16 20">
    <original>I</original>
    <variation>V</variation>
    <location>
        <position position="2669"/>
    </location>
</feature>
<feature type="sequence variant" id="VAR_027342" description="In USH1D; atypical; dbSNP:rs376189742." evidence="8">
    <original>G</original>
    <variation>S</variation>
    <location>
        <position position="2744"/>
    </location>
</feature>
<feature type="sequence variant" id="VAR_046434" description="In USH1D; dbSNP:rs201076440." evidence="17">
    <original>G</original>
    <variation>S</variation>
    <location>
        <position position="2771"/>
    </location>
</feature>
<feature type="sequence variant" id="VAR_046435" description="In dbSNP:rs3802707." evidence="16 20 21">
    <original>F</original>
    <variation>V</variation>
    <location>
        <position position="2801"/>
    </location>
</feature>
<feature type="sequence variant" id="VAR_027343" description="In USH1D; atypical; dbSNP:rs760130862." evidence="8">
    <original>R</original>
    <variation>G</variation>
    <location>
        <position position="2833"/>
    </location>
</feature>
<feature type="sequence variant" id="VAR_046436" description="Requires 2 nucleotide substitutions.">
    <original>A</original>
    <variation>Q</variation>
    <location>
        <position position="2853"/>
    </location>
</feature>
<feature type="sequence variant" id="VAR_071428" description="In dbSNP:rs1381655860." evidence="20">
    <original>G</original>
    <variation>S</variation>
    <location>
        <position position="2912"/>
    </location>
</feature>
<feature type="sequence variant" id="VAR_027344" evidence="8">
    <original>V</original>
    <variation>E</variation>
    <location>
        <position position="2933"/>
    </location>
</feature>
<feature type="sequence variant" id="VAR_012187" description="In DFNB12; dbSNP:rs752937051." evidence="5">
    <original>I</original>
    <variation>N</variation>
    <location>
        <position position="2950"/>
    </location>
</feature>
<feature type="sequence variant" id="VAR_027345" description="In dbSNP:rs756793995." evidence="8">
    <original>D</original>
    <variation>N</variation>
    <location>
        <position position="2954"/>
    </location>
</feature>
<feature type="sequence variant" id="VAR_012188" description="In DFNB12; dbSNP:rs751367894." evidence="5">
    <original>R</original>
    <variation>C</variation>
    <location>
        <position position="2956"/>
    </location>
</feature>
<feature type="sequence variant" id="VAR_027346" evidence="8">
    <original>N</original>
    <variation>S</variation>
    <location>
        <position position="2962"/>
    </location>
</feature>
<feature type="sequence variant" id="VAR_046437" description="In USH1D; dbSNP:rs765847991." evidence="17">
    <original>V</original>
    <variation>A</variation>
    <location>
        <position position="2968"/>
    </location>
</feature>
<feature type="sequence variant" id="VAR_012189" description="In DFNB12; dbSNP:rs780514498." evidence="5">
    <original>P</original>
    <variation>T</variation>
    <location>
        <position position="3059"/>
    </location>
</feature>
<feature type="sequence variant" id="VAR_072662" description="In dbSNP:rs770888523." evidence="22">
    <original>M</original>
    <variation>T</variation>
    <location>
        <position position="3062"/>
    </location>
</feature>
<feature type="sequence variant" id="VAR_071429" description="In dbSNP:rs369395479." evidence="21">
    <original>A</original>
    <variation>T</variation>
    <location>
        <position position="3080"/>
    </location>
</feature>
<feature type="sequence variant" id="VAR_012190" description="In dbSNP:rs45583140." evidence="6 17 21">
    <original>F</original>
    <variation>L</variation>
    <location>
        <position position="3125"/>
    </location>
</feature>
<feature type="sequence variant" id="VAR_080383" description="In PITA5; uncertain significance; dbSNP:rs1052484950." evidence="23">
    <original>R</original>
    <variation>W</variation>
    <location>
        <position position="3138"/>
    </location>
</feature>
<feature type="sequence variant" id="VAR_046438" description="In dbSNP:rs770796134." evidence="16 20">
    <original>R</original>
    <variation>C</variation>
    <location>
        <position position="3175"/>
    </location>
</feature>
<feature type="sequence variant" id="VAR_027347" description="In USH1D; dbSNP:rs140884994." evidence="8">
    <original>R</original>
    <variation>H</variation>
    <location>
        <position position="3175"/>
    </location>
</feature>
<feature type="sequence variant" id="VAR_024033" description="In USH1D and USH1DF; uncertain significance; dbSNP:rs121908353." evidence="11 12">
    <original>R</original>
    <variation>W</variation>
    <location>
        <position position="3189"/>
    </location>
</feature>
<feature type="sequence variant" id="VAR_024034" description="In USH1D." evidence="12">
    <original>S</original>
    <variation>F</variation>
    <location>
        <position position="3245"/>
    </location>
</feature>
<feature type="sequence variant" id="VAR_080384" description="In PITA5; uncertain significance; dbSNP:rs372388344." evidence="23">
    <original>D</original>
    <variation>N</variation>
    <location>
        <position position="3296"/>
    </location>
</feature>
<feature type="sequence conflict" description="In Ref. 7; AAG27034." evidence="32" ref="7">
    <original>V</original>
    <variation>L</variation>
    <location>
        <position position="985"/>
    </location>
</feature>
<feature type="sequence conflict" description="In Ref. 7; AAG27034." evidence="32" ref="7">
    <original>K</original>
    <variation>V</variation>
    <location>
        <position position="1403"/>
    </location>
</feature>
<feature type="sequence conflict" description="In Ref. 8; BAB61902." evidence="32" ref="8">
    <original>EFLNPIQTVSVLESAEPGTVIANITAIDHDLNPKLEYHIVGIVAKDDTDRLVPNQEDAFAVNIN</original>
    <variation>ASWEGQSHVTQAYEEAVGPPQPQVPDSTGDRHPLWGLGGFGQEHPWEGQILGGSSQAEPGLVWS</variation>
    <location>
        <begin position="2173"/>
        <end position="2236"/>
    </location>
</feature>
<feature type="strand" evidence="37">
    <location>
        <begin position="560"/>
        <end position="564"/>
    </location>
</feature>
<feature type="strand" evidence="37">
    <location>
        <begin position="566"/>
        <end position="571"/>
    </location>
</feature>
<feature type="strand" evidence="37">
    <location>
        <begin position="577"/>
        <end position="583"/>
    </location>
</feature>
<feature type="strand" evidence="37">
    <location>
        <begin position="597"/>
        <end position="605"/>
    </location>
</feature>
<feature type="helix" evidence="37">
    <location>
        <begin position="607"/>
        <end position="609"/>
    </location>
</feature>
<feature type="strand" evidence="37">
    <location>
        <begin position="610"/>
        <end position="615"/>
    </location>
</feature>
<feature type="strand" evidence="37">
    <location>
        <begin position="618"/>
        <end position="623"/>
    </location>
</feature>
<feature type="helix" evidence="37">
    <location>
        <begin position="629"/>
        <end position="631"/>
    </location>
</feature>
<feature type="helix" evidence="37">
    <location>
        <begin position="633"/>
        <end position="635"/>
    </location>
</feature>
<feature type="strand" evidence="37">
    <location>
        <begin position="636"/>
        <end position="644"/>
    </location>
</feature>
<feature type="strand" evidence="37">
    <location>
        <begin position="652"/>
        <end position="662"/>
    </location>
</feature>
<feature type="strand" evidence="37">
    <location>
        <begin position="670"/>
        <end position="672"/>
    </location>
</feature>
<feature type="strand" evidence="37">
    <location>
        <begin position="674"/>
        <end position="683"/>
    </location>
</feature>
<feature type="strand" evidence="37">
    <location>
        <begin position="689"/>
        <end position="692"/>
    </location>
</feature>
<feature type="turn" evidence="37">
    <location>
        <begin position="702"/>
        <end position="704"/>
    </location>
</feature>
<feature type="helix" evidence="37">
    <location>
        <begin position="706"/>
        <end position="708"/>
    </location>
</feature>
<feature type="strand" evidence="37">
    <location>
        <begin position="710"/>
        <end position="715"/>
    </location>
</feature>
<feature type="strand" evidence="37">
    <location>
        <begin position="719"/>
        <end position="721"/>
    </location>
</feature>
<feature type="turn" evidence="37">
    <location>
        <begin position="723"/>
        <end position="725"/>
    </location>
</feature>
<feature type="strand" evidence="37">
    <location>
        <begin position="727"/>
        <end position="732"/>
    </location>
</feature>
<feature type="turn" evidence="37">
    <location>
        <begin position="736"/>
        <end position="738"/>
    </location>
</feature>
<feature type="strand" evidence="37">
    <location>
        <begin position="741"/>
        <end position="749"/>
    </location>
</feature>
<feature type="helix" evidence="37">
    <location>
        <begin position="754"/>
        <end position="756"/>
    </location>
</feature>
<feature type="strand" evidence="37">
    <location>
        <begin position="759"/>
        <end position="769"/>
    </location>
</feature>
<feature type="strand" evidence="37">
    <location>
        <begin position="777"/>
        <end position="780"/>
    </location>
</feature>
<feature type="strand" evidence="37">
    <location>
        <begin position="782"/>
        <end position="787"/>
    </location>
</feature>
<feature type="strand" evidence="37">
    <location>
        <begin position="796"/>
        <end position="799"/>
    </location>
</feature>
<feature type="helix" evidence="37">
    <location>
        <begin position="808"/>
        <end position="811"/>
    </location>
</feature>
<feature type="strand" evidence="37">
    <location>
        <begin position="813"/>
        <end position="819"/>
    </location>
</feature>
<feature type="strand" evidence="37">
    <location>
        <begin position="824"/>
        <end position="826"/>
    </location>
</feature>
<feature type="turn" evidence="37">
    <location>
        <begin position="828"/>
        <end position="830"/>
    </location>
</feature>
<feature type="strand" evidence="37">
    <location>
        <begin position="832"/>
        <end position="835"/>
    </location>
</feature>
<feature type="helix" evidence="37">
    <location>
        <begin position="847"/>
        <end position="851"/>
    </location>
</feature>
<feature type="strand" evidence="37">
    <location>
        <begin position="854"/>
        <end position="862"/>
    </location>
</feature>
<feature type="strand" evidence="37">
    <location>
        <begin position="874"/>
        <end position="880"/>
    </location>
</feature>
<feature type="strand" evidence="38">
    <location>
        <begin position="1312"/>
        <end position="1323"/>
    </location>
</feature>
<feature type="strand" evidence="38">
    <location>
        <begin position="1331"/>
        <end position="1334"/>
    </location>
</feature>
<feature type="strand" evidence="38">
    <location>
        <begin position="1347"/>
        <end position="1350"/>
    </location>
</feature>
<feature type="helix" evidence="38">
    <location>
        <begin position="1356"/>
        <end position="1361"/>
    </location>
</feature>
<feature type="strand" evidence="38">
    <location>
        <begin position="1362"/>
        <end position="1364"/>
    </location>
</feature>
<feature type="turn" evidence="38">
    <location>
        <begin position="1366"/>
        <end position="1368"/>
    </location>
</feature>
<feature type="strand" evidence="38">
    <location>
        <begin position="1370"/>
        <end position="1373"/>
    </location>
</feature>
<feature type="turn" evidence="38">
    <location>
        <begin position="1379"/>
        <end position="1381"/>
    </location>
</feature>
<feature type="strand" evidence="38">
    <location>
        <begin position="1383"/>
        <end position="1392"/>
    </location>
</feature>
<feature type="strand" evidence="38">
    <location>
        <begin position="1394"/>
        <end position="1397"/>
    </location>
</feature>
<feature type="strand" evidence="38">
    <location>
        <begin position="1400"/>
        <end position="1409"/>
    </location>
</feature>
<feature type="strand" evidence="38">
    <location>
        <begin position="1425"/>
        <end position="1429"/>
    </location>
</feature>
<feature type="strand" evidence="38">
    <location>
        <begin position="1437"/>
        <end position="1444"/>
    </location>
</feature>
<feature type="helix" evidence="38">
    <location>
        <begin position="1449"/>
        <end position="1452"/>
    </location>
</feature>
<feature type="strand" evidence="38">
    <location>
        <begin position="1454"/>
        <end position="1460"/>
    </location>
</feature>
<feature type="helix" evidence="38">
    <location>
        <begin position="1463"/>
        <end position="1465"/>
    </location>
</feature>
<feature type="strand" evidence="38">
    <location>
        <begin position="1467"/>
        <end position="1472"/>
    </location>
</feature>
<feature type="turn" evidence="38">
    <location>
        <begin position="1473"/>
        <end position="1475"/>
    </location>
</feature>
<feature type="strand" evidence="38">
    <location>
        <begin position="1476"/>
        <end position="1481"/>
    </location>
</feature>
<feature type="turn" evidence="38">
    <location>
        <begin position="1487"/>
        <end position="1489"/>
    </location>
</feature>
<feature type="strand" evidence="38">
    <location>
        <begin position="1492"/>
        <end position="1501"/>
    </location>
</feature>
<feature type="strand" evidence="38">
    <location>
        <begin position="1503"/>
        <end position="1505"/>
    </location>
</feature>
<feature type="strand" evidence="38">
    <location>
        <begin position="1508"/>
        <end position="1518"/>
    </location>
</feature>
<feature type="helix" evidence="34">
    <location>
        <begin position="3187"/>
        <end position="3198"/>
    </location>
</feature>
<feature type="helix" evidence="36">
    <location>
        <begin position="3214"/>
        <end position="3226"/>
    </location>
</feature>
<feature type="strand" evidence="35">
    <location>
        <begin position="3351"/>
        <end position="3353"/>
    </location>
</feature>
<comment type="function">
    <text evidence="6 14">Cadherins are calcium-dependent cell adhesion proteins. They preferentially interact with themselves in a homophilic manner in connecting cells. CDH23 is required for establishing and/or maintaining the proper organization of the stereocilia bundle of hair cells in the cochlea and the vestibule during late embryonic/early postnatal development. It is part of the functional network formed by USH1C, USH1G, CDH23 and MYO7A that mediates mechanotransduction in cochlear hair cells. Required for normal hearing.</text>
</comment>
<comment type="subunit">
    <text evidence="2 18 19">antiparallel heterodimer with PCDH15 (By similarity). Interacts with USH1C and USH1G (PubMed:19297620, PubMed:21436032).</text>
</comment>
<comment type="subcellular location">
    <subcellularLocation>
        <location evidence="32">Cell membrane</location>
        <topology evidence="3">Single-pass type I membrane protein</topology>
    </subcellularLocation>
</comment>
<comment type="alternative products">
    <event type="alternative splicing"/>
    <isoform>
        <id>Q9H251-1</id>
        <name>1</name>
        <sequence type="displayed"/>
    </isoform>
    <isoform>
        <id>Q9H251-2</id>
        <name>2</name>
        <sequence type="described" ref="VSP_000645"/>
    </isoform>
    <isoform>
        <id>Q9H251-3</id>
        <name>3</name>
        <sequence type="described" ref="VSP_000646"/>
    </isoform>
    <isoform>
        <id>Q9H251-4</id>
        <name>4</name>
        <sequence type="described" ref="VSP_000647"/>
    </isoform>
    <isoform>
        <id>Q9H251-5</id>
        <name>5</name>
        <sequence type="described" ref="VSP_013268 VSP_013269"/>
    </isoform>
    <isoform>
        <id>Q9H251-6</id>
        <name>6</name>
        <sequence type="described" ref="VSP_035289 VSP_035290"/>
    </isoform>
    <isoform>
        <id>Q9H251-7</id>
        <name>7</name>
        <name>B1</name>
        <sequence type="described" ref="VSP_044260"/>
    </isoform>
    <isoform>
        <id>Q9H251-8</id>
        <name>8</name>
        <sequence type="described" ref="VSP_044261 VSP_000645"/>
    </isoform>
    <isoform>
        <id>Q9H251-9</id>
        <name>9</name>
        <name>B2</name>
        <sequence type="described" ref="VSP_044260 VSP_000647"/>
    </isoform>
    <isoform>
        <id>Q9H251-10</id>
        <name>10</name>
        <name>C1</name>
        <sequence type="described" ref="VSP_047923 VSP_047924"/>
    </isoform>
    <isoform>
        <id>Q9H251-11</id>
        <name>11</name>
        <name>C2</name>
        <sequence type="described" ref="VSP_047923 VSP_047924 VSP_000647"/>
    </isoform>
    <text>Additional isoforms seem to exist.</text>
</comment>
<comment type="tissue specificity">
    <text evidence="6">Particularly strong expression in the retina (PubMed:11138009). Found also in the cochlea.</text>
</comment>
<comment type="domain">
    <text evidence="1">Three calcium ions are usually bound at the interface of each cadherin domain and rigidify the connections, imparting a strong curvature to the full-length ectodomain.</text>
</comment>
<comment type="domain">
    <text evidence="2">Cadherin repeats 1 and 2 mediate calcium-dependent heterophilic interaction with PCDH15.</text>
</comment>
<comment type="disease" evidence="6 8 12 14 17">
    <disease id="DI-01114">
        <name>Usher syndrome 1D</name>
        <acronym>USH1D</acronym>
        <description>USH is a genetically heterogeneous condition characterized by the association of retinitis pigmentosa with sensorineural deafness. Age at onset and differences in auditory and vestibular function distinguish Usher syndrome type 1 (USH1), Usher syndrome type 2 (USH2) and Usher syndrome type 3 (USH3). USH1 is characterized by profound congenital sensorineural deafness, absent vestibular function and prepubertal onset of progressive retinitis pigmentosa leading to blindness.</description>
        <dbReference type="MIM" id="601067"/>
    </disease>
    <text>The disease is caused by variants affecting the gene represented in this entry.</text>
</comment>
<comment type="disease" evidence="11">
    <disease id="DI-01115">
        <name>Usher syndrome 1D/F</name>
        <acronym>USH1DF</acronym>
        <description>A digenic recessive form of Usher syndrome, a genetically heterogeneous condition characterized by the association of retinitis pigmentosa with sensorineural deafness. Age at onset and differences in auditory and vestibular function distinguish Usher syndrome type 1 (USH1), Usher syndrome type 2 (USH2) and Usher syndrome type 3 (USH3). USH1 is characterized by profound congenital sensorineural deafness, absent vestibular function and prepubertal onset of progressive retinitis pigmentosa leading to blindness.</description>
        <dbReference type="MIM" id="601067"/>
    </disease>
    <text>The disease is caused by variants affecting distinct genetic loci, including the gene represented in this entry.</text>
</comment>
<comment type="disease" evidence="5 8 9 13 14 15 16 20 21">
    <disease id="DI-00862">
        <name>Deafness, autosomal recessive, 12</name>
        <acronym>DFNB12</acronym>
        <description>A form of non-syndromic sensorineural hearing loss. Sensorineural deafness results from damage to the neural receptors of the inner ear, the nerve pathways to the brain, or the area of the brain that receives sound information.</description>
        <dbReference type="MIM" id="601386"/>
    </disease>
    <text>The disease is caused by variants affecting the gene represented in this entry.</text>
</comment>
<comment type="disease" evidence="23">
    <disease id="DI-05087">
        <name>Pituitary adenoma 5, multiple types</name>
        <acronym>PITA5</acronym>
        <description>A form of pituitary adenoma, a neoplasm of the pituitary gland and one of the most common neuroendocrine tumors. Pituitary adenomas are clinically classified as functional and non-functional tumors, and manifest with a variety of features, including local invasion of surrounding structures and excessive hormone secretion. Functional pituitary adenomas are further classified by the type of hormone they secrete: growth hormone (GH)-secreting, prolactin (PRL)-secreting, adrenocorticotropin (ACTH)-secreting, thyroid-stimulating hormone (TSH)-secreting, and plurihormonal (GH and TSH) tumors. Familial and sporadic forms have been reported. The transmission pattern of familial PITA5 is consistent with autosomal dominant inheritance with reduced penetrance.</description>
        <dbReference type="MIM" id="617540"/>
    </disease>
    <text>Disease susceptibility is associated with variants affecting the gene represented in this entry.</text>
</comment>
<name>CAD23_HUMAN</name>
<accession>Q9H251</accession>
<accession>C4IXS9</accession>
<accession>F6U049</accession>
<accession>Q5QGS1</accession>
<accession>Q5QGS2</accession>
<accession>Q5QGS5</accession>
<accession>Q5QGS6</accession>
<accession>Q5XKN2</accession>
<accession>Q6UWW1</accession>
<accession>Q96JL3</accession>
<accession>Q9H4K9</accession>
<organism>
    <name type="scientific">Homo sapiens</name>
    <name type="common">Human</name>
    <dbReference type="NCBI Taxonomy" id="9606"/>
    <lineage>
        <taxon>Eukaryota</taxon>
        <taxon>Metazoa</taxon>
        <taxon>Chordata</taxon>
        <taxon>Craniata</taxon>
        <taxon>Vertebrata</taxon>
        <taxon>Euteleostomi</taxon>
        <taxon>Mammalia</taxon>
        <taxon>Eutheria</taxon>
        <taxon>Euarchontoglires</taxon>
        <taxon>Primates</taxon>
        <taxon>Haplorrhini</taxon>
        <taxon>Catarrhini</taxon>
        <taxon>Hominidae</taxon>
        <taxon>Homo</taxon>
    </lineage>
</organism>
<reference key="1">
    <citation type="journal article" date="2001" name="Nat. Genet.">
        <title>Mutation of CDH23, encoding a new member of the cadherin gene family, causes Usher syndrome type 1D.</title>
        <authorList>
            <person name="Bolz H."/>
            <person name="Von Brederlow B."/>
            <person name="Ramirez A."/>
            <person name="Bryda E.C."/>
            <person name="Kutsche K."/>
            <person name="Nothwang H.G."/>
            <person name="Seeliger M."/>
            <person name="Del C.-Salcedo Cabrera M."/>
            <person name="Vila Caballero M."/>
            <person name="Pelaez Molina O."/>
            <person name="Gal A."/>
            <person name="Kubisch C."/>
        </authorList>
    </citation>
    <scope>NUCLEOTIDE SEQUENCE [MRNA]</scope>
    <scope>FUNCTION</scope>
    <scope>ALTERNATIVE SPLICING</scope>
    <scope>TISSUE SPECIFICITY</scope>
    <scope>VARIANTS USH1D MET-1281 DEL; HIS-1496 AND GLN-1746</scope>
    <scope>VARIANTS CYS-3; ALA-490; ASN-496; THR-1222; CYS-1349; ASP-1351; THR-1575; SER-1671; ILE-1675; GLN-1804; SER-1999; LYS-2044; GLN-2358; LEU-2380; GLN-2588 AND LEU-3125</scope>
</reference>
<reference key="2">
    <citation type="journal article" date="2003" name="Genome Res.">
        <title>The secreted protein discovery initiative (SPDI), a large-scale effort to identify novel human secreted and transmembrane proteins: a bioinformatics assessment.</title>
        <authorList>
            <person name="Clark H.F."/>
            <person name="Gurney A.L."/>
            <person name="Abaya E."/>
            <person name="Baker K."/>
            <person name="Baldwin D.T."/>
            <person name="Brush J."/>
            <person name="Chen J."/>
            <person name="Chow B."/>
            <person name="Chui C."/>
            <person name="Crowley C."/>
            <person name="Currell B."/>
            <person name="Deuel B."/>
            <person name="Dowd P."/>
            <person name="Eaton D."/>
            <person name="Foster J.S."/>
            <person name="Grimaldi C."/>
            <person name="Gu Q."/>
            <person name="Hass P.E."/>
            <person name="Heldens S."/>
            <person name="Huang A."/>
            <person name="Kim H.S."/>
            <person name="Klimowski L."/>
            <person name="Jin Y."/>
            <person name="Johnson S."/>
            <person name="Lee J."/>
            <person name="Lewis L."/>
            <person name="Liao D."/>
            <person name="Mark M.R."/>
            <person name="Robbie E."/>
            <person name="Sanchez C."/>
            <person name="Schoenfeld J."/>
            <person name="Seshagiri S."/>
            <person name="Simmons L."/>
            <person name="Singh J."/>
            <person name="Smith V."/>
            <person name="Stinson J."/>
            <person name="Vagts A."/>
            <person name="Vandlen R.L."/>
            <person name="Watanabe C."/>
            <person name="Wieand D."/>
            <person name="Woods K."/>
            <person name="Xie M.-H."/>
            <person name="Yansura D.G."/>
            <person name="Yi S."/>
            <person name="Yu G."/>
            <person name="Yuan J."/>
            <person name="Zhang M."/>
            <person name="Zhang Z."/>
            <person name="Goddard A.D."/>
            <person name="Wood W.I."/>
            <person name="Godowski P.J."/>
            <person name="Gray A.M."/>
        </authorList>
    </citation>
    <scope>NUCLEOTIDE SEQUENCE [LARGE SCALE MRNA] (ISOFORM 5)</scope>
    <scope>VARIANT CYS-3</scope>
</reference>
<reference key="3">
    <citation type="journal article" date="2005" name="Dev. Biol.">
        <title>Spatiotemporal pattern and isoforms of cadherin 23 in wild type and waltzer mice during inner ear hair cell development.</title>
        <authorList>
            <person name="Lagziel A."/>
            <person name="Ahmed Z.M."/>
            <person name="Schultz J.M."/>
            <person name="Morell R.J."/>
            <person name="Belyantseva I.A."/>
            <person name="Friedman T.B."/>
        </authorList>
    </citation>
    <scope>NUCLEOTIDE SEQUENCE [MRNA] (ISOFORMS 7; 9; 10 AND 11)</scope>
    <source>
        <tissue>Retina</tissue>
    </source>
</reference>
<reference key="4">
    <citation type="journal article" date="2004" name="Nature">
        <title>The DNA sequence and comparative analysis of human chromosome 10.</title>
        <authorList>
            <person name="Deloukas P."/>
            <person name="Earthrowl M.E."/>
            <person name="Grafham D.V."/>
            <person name="Rubenfield M."/>
            <person name="French L."/>
            <person name="Steward C.A."/>
            <person name="Sims S.K."/>
            <person name="Jones M.C."/>
            <person name="Searle S."/>
            <person name="Scott C."/>
            <person name="Howe K."/>
            <person name="Hunt S.E."/>
            <person name="Andrews T.D."/>
            <person name="Gilbert J.G.R."/>
            <person name="Swarbreck D."/>
            <person name="Ashurst J.L."/>
            <person name="Taylor A."/>
            <person name="Battles J."/>
            <person name="Bird C.P."/>
            <person name="Ainscough R."/>
            <person name="Almeida J.P."/>
            <person name="Ashwell R.I.S."/>
            <person name="Ambrose K.D."/>
            <person name="Babbage A.K."/>
            <person name="Bagguley C.L."/>
            <person name="Bailey J."/>
            <person name="Banerjee R."/>
            <person name="Bates K."/>
            <person name="Beasley H."/>
            <person name="Bray-Allen S."/>
            <person name="Brown A.J."/>
            <person name="Brown J.Y."/>
            <person name="Burford D.C."/>
            <person name="Burrill W."/>
            <person name="Burton J."/>
            <person name="Cahill P."/>
            <person name="Camire D."/>
            <person name="Carter N.P."/>
            <person name="Chapman J.C."/>
            <person name="Clark S.Y."/>
            <person name="Clarke G."/>
            <person name="Clee C.M."/>
            <person name="Clegg S."/>
            <person name="Corby N."/>
            <person name="Coulson A."/>
            <person name="Dhami P."/>
            <person name="Dutta I."/>
            <person name="Dunn M."/>
            <person name="Faulkner L."/>
            <person name="Frankish A."/>
            <person name="Frankland J.A."/>
            <person name="Garner P."/>
            <person name="Garnett J."/>
            <person name="Gribble S."/>
            <person name="Griffiths C."/>
            <person name="Grocock R."/>
            <person name="Gustafson E."/>
            <person name="Hammond S."/>
            <person name="Harley J.L."/>
            <person name="Hart E."/>
            <person name="Heath P.D."/>
            <person name="Ho T.P."/>
            <person name="Hopkins B."/>
            <person name="Horne J."/>
            <person name="Howden P.J."/>
            <person name="Huckle E."/>
            <person name="Hynds C."/>
            <person name="Johnson C."/>
            <person name="Johnson D."/>
            <person name="Kana A."/>
            <person name="Kay M."/>
            <person name="Kimberley A.M."/>
            <person name="Kershaw J.K."/>
            <person name="Kokkinaki M."/>
            <person name="Laird G.K."/>
            <person name="Lawlor S."/>
            <person name="Lee H.M."/>
            <person name="Leongamornlert D.A."/>
            <person name="Laird G."/>
            <person name="Lloyd C."/>
            <person name="Lloyd D.M."/>
            <person name="Loveland J."/>
            <person name="Lovell J."/>
            <person name="McLaren S."/>
            <person name="McLay K.E."/>
            <person name="McMurray A."/>
            <person name="Mashreghi-Mohammadi M."/>
            <person name="Matthews L."/>
            <person name="Milne S."/>
            <person name="Nickerson T."/>
            <person name="Nguyen M."/>
            <person name="Overton-Larty E."/>
            <person name="Palmer S.A."/>
            <person name="Pearce A.V."/>
            <person name="Peck A.I."/>
            <person name="Pelan S."/>
            <person name="Phillimore B."/>
            <person name="Porter K."/>
            <person name="Rice C.M."/>
            <person name="Rogosin A."/>
            <person name="Ross M.T."/>
            <person name="Sarafidou T."/>
            <person name="Sehra H.K."/>
            <person name="Shownkeen R."/>
            <person name="Skuce C.D."/>
            <person name="Smith M."/>
            <person name="Standring L."/>
            <person name="Sycamore N."/>
            <person name="Tester J."/>
            <person name="Thorpe A."/>
            <person name="Torcasso W."/>
            <person name="Tracey A."/>
            <person name="Tromans A."/>
            <person name="Tsolas J."/>
            <person name="Wall M."/>
            <person name="Walsh J."/>
            <person name="Wang H."/>
            <person name="Weinstock K."/>
            <person name="West A.P."/>
            <person name="Willey D.L."/>
            <person name="Whitehead S.L."/>
            <person name="Wilming L."/>
            <person name="Wray P.W."/>
            <person name="Young L."/>
            <person name="Chen Y."/>
            <person name="Lovering R.C."/>
            <person name="Moschonas N.K."/>
            <person name="Siebert R."/>
            <person name="Fechtel K."/>
            <person name="Bentley D."/>
            <person name="Durbin R.M."/>
            <person name="Hubbard T."/>
            <person name="Doucette-Stamm L."/>
            <person name="Beck S."/>
            <person name="Smith D.R."/>
            <person name="Rogers J."/>
        </authorList>
    </citation>
    <scope>NUCLEOTIDE SEQUENCE [LARGE SCALE GENOMIC DNA]</scope>
</reference>
<reference key="5">
    <citation type="journal article" date="2004" name="Genome Res.">
        <title>The status, quality, and expansion of the NIH full-length cDNA project: the Mammalian Gene Collection (MGC).</title>
        <authorList>
            <consortium name="The MGC Project Team"/>
        </authorList>
    </citation>
    <scope>NUCLEOTIDE SEQUENCE [LARGE SCALE MRNA] (ISOFORM 5)</scope>
    <source>
        <tissue>Eye</tissue>
    </source>
</reference>
<reference key="6">
    <citation type="journal article" date="2001" name="DNA Res.">
        <title>Prediction of the coding sequences of unidentified human genes. XX. The complete sequences of 100 new cDNA clones from brain which code for large proteins in vitro.</title>
        <authorList>
            <person name="Nagase T."/>
            <person name="Nakayama M."/>
            <person name="Nakajima D."/>
            <person name="Kikuno R."/>
            <person name="Ohara O."/>
        </authorList>
    </citation>
    <scope>NUCLEOTIDE SEQUENCE [LARGE SCALE MRNA] OF 410-3354 (ISOFORM 6)</scope>
    <scope>VARIANT ASN-496</scope>
    <source>
        <tissue>Brain</tissue>
    </source>
</reference>
<reference key="7">
    <citation type="journal article" date="2001" name="Am. J. Hum. Genet.">
        <title>Usher syndrome 1D and nonsyndromic autosomal recessive deafness DFNB12 are caused by allelic mutations of the novel cadherin-like gene CDH23.</title>
        <authorList>
            <person name="Bork J.M."/>
            <person name="Peters L.M."/>
            <person name="Riazuddin S."/>
            <person name="Bernstein S.L."/>
            <person name="Ahmed Z.M."/>
            <person name="Ness S.L."/>
            <person name="Polomeno R."/>
            <person name="Ramesh A."/>
            <person name="Schloss M."/>
            <person name="Srisailpathy C.R.S."/>
            <person name="Wayne S."/>
            <person name="Bellman S."/>
            <person name="Desmukh D."/>
            <person name="Ahmed Z."/>
            <person name="Khan S.N."/>
            <person name="Kaloustian V.M.D."/>
            <person name="Li X.C."/>
            <person name="Lalwani A."/>
            <person name="Riazuddin S."/>
            <person name="Bitner-Glindzicz M."/>
            <person name="Nance W.E."/>
            <person name="Liu X.-Z."/>
            <person name="Wistow G."/>
            <person name="Smith R.J.H."/>
            <person name="Griffith A.J."/>
            <person name="Wilcox E.R."/>
            <person name="Friedman T.B."/>
            <person name="Morell R.J."/>
        </authorList>
    </citation>
    <scope>NUCLEOTIDE SEQUENCE [MRNA] OF 803-3354</scope>
    <scope>ALTERNATIVE SPLICING</scope>
    <scope>VARIANTS DFNB12 ASN-990; ASP-1351; THR-1575; ASN-2045; ASN-2202; ASN-2950; CYS-2956 AND THR-3059</scope>
</reference>
<reference key="8">
    <citation type="journal article" date="2001" name="Brain Res. Mol. Brain Res.">
        <title>Identification of three novel non-classical cadherin genes through comprehensive analysis of large cDNAs.</title>
        <authorList>
            <person name="Nakajima D."/>
            <person name="Nakayama M."/>
            <person name="Kikuno R."/>
            <person name="Hirosawa M."/>
            <person name="Nagase T."/>
            <person name="Ohara O."/>
        </authorList>
    </citation>
    <scope>NUCLEOTIDE SEQUENCE [LARGE SCALE MRNA] OF 2173-3354 (ISOFORM 4)</scope>
    <source>
        <tissue>Brain</tissue>
    </source>
</reference>
<reference key="9">
    <citation type="journal article" date="2011" name="Proc. Natl. Acad. Sci. U.S.A.">
        <title>Usher type 1G protein sans is a critical component of the tip-link complex, a structure controlling actin polymerization in stereocilia.</title>
        <authorList>
            <person name="Caberlotto E."/>
            <person name="Michel V."/>
            <person name="Foucher I."/>
            <person name="Bahloul A."/>
            <person name="Goodyear R.J."/>
            <person name="Pepermans E."/>
            <person name="Michalski N."/>
            <person name="Perfettini I."/>
            <person name="Alegria-Prevot O."/>
            <person name="Chardenoux S."/>
            <person name="Do Cruzeiro M."/>
            <person name="Hardelin J.P."/>
            <person name="Richardson G.P."/>
            <person name="Avan P."/>
            <person name="Weil D."/>
            <person name="Petit C."/>
        </authorList>
    </citation>
    <scope>INTERACTION WITH USH1G</scope>
</reference>
<reference key="10">
    <citation type="journal article" date="2009" name="Proc. Natl. Acad. Sci. U.S.A.">
        <title>Assembling stable hair cell tip link complex via multidentate interactions between harmonin and cadherin 23.</title>
        <authorList>
            <person name="Pan L."/>
            <person name="Yan J."/>
            <person name="Wu L."/>
            <person name="Zhang M."/>
        </authorList>
    </citation>
    <scope>STRUCTURE BY NMR OF 3183-3354 IN COMPLEX WITH USH1C</scope>
    <scope>INTERACTION WITH USH1C</scope>
</reference>
<reference key="11">
    <citation type="journal article" date="2002" name="Am. J. Hum. Genet.">
        <title>CDH23 mutation and phenotype heterogeneity: a profile of 107 diverse families with Usher syndrome and nonsyndromic deafness.</title>
        <authorList>
            <person name="Astuto L.M."/>
            <person name="Bork J.M."/>
            <person name="Weston M.D."/>
            <person name="Askew J.W."/>
            <person name="Fields R.R."/>
            <person name="Orten D.J."/>
            <person name="Ohliger S.J."/>
            <person name="Riazuddin S."/>
            <person name="Morell R.J."/>
            <person name="Khan S."/>
            <person name="Riazuddin S."/>
            <person name="Kremer H."/>
            <person name="van Hauwe P."/>
            <person name="Moller C.G."/>
            <person name="Cremers C.W.R.J."/>
            <person name="Ayuso C."/>
            <person name="Heckenlively J.R."/>
            <person name="Rohrschneider K."/>
            <person name="Spandau U."/>
            <person name="Greenberg J."/>
            <person name="Ramesar R."/>
            <person name="Reardon W."/>
            <person name="Bitoun P."/>
            <person name="Millan J."/>
            <person name="Legge R."/>
            <person name="Friedman T.B."/>
            <person name="Kimberling W.J."/>
        </authorList>
    </citation>
    <scope>VARIANTS DFNB12 GLY-124; SER-452; GLN-480; GLN-582; TRP-1060; ASP-1186; PRO-1586; LYS-1595; ASN-1846; TRP-2465 AND HIS-2608</scope>
    <scope>VARIANTS USH1D PRO-484; ARG-1206; ALA-1209; GLY-2517; SER-2744; GLY-2833 AND HIS-3175</scope>
    <scope>VARIANTS CYS-3; ALA-490; ASN-496; THR-1222; GLN-1437; MET-1620; ILE-1675; GLN-1804; ILE-1887; SER-1999; LYS-2044; GLN-2066; ILE-2283; GLN-2358; LEU-2380; GLN-2588; GLU-2933; ASN-2954 AND SER-2962</scope>
</reference>
<reference key="12">
    <citation type="journal article" date="2003" name="Hum. Genet.">
        <title>Mutations in the calcium-binding motifs of CDH23 and the 35delG mutation in GJB2 cause hearing loss in one family.</title>
        <authorList>
            <person name="de Brouwer A.P.M."/>
            <person name="Pennings R.J.E."/>
            <person name="Roeters M."/>
            <person name="Van Hauwe P."/>
            <person name="Astuto L.M."/>
            <person name="Hoefsloot L.H."/>
            <person name="Huygen P.L.M."/>
            <person name="van den Helm B."/>
            <person name="Deutman A.F."/>
            <person name="Bork J.M."/>
            <person name="Kimberling W.J."/>
            <person name="Cremers F.P.M."/>
            <person name="Cremers C.W.R.J."/>
            <person name="Kremer H."/>
        </authorList>
    </citation>
    <scope>VARIANTS DFNB12 ASN-1341 AND ASN-2148</scope>
    <scope>VARIANTS ILE-2283; GLN-2358 AND LEU-2380</scope>
</reference>
<reference key="13">
    <citation type="journal article" date="2005" name="Hum. Genet.">
        <title>Characterization of Usher syndrome type I gene mutations in an Usher syndrome patient population.</title>
        <authorList>
            <person name="Ouyang X.M."/>
            <person name="Yan D."/>
            <person name="Du L.L."/>
            <person name="Hejtmancik J.F."/>
            <person name="Jacobson S.G."/>
            <person name="Nance W.E."/>
            <person name="Li A.R."/>
            <person name="Angeli S."/>
            <person name="Kaiser M."/>
            <person name="Newton V."/>
            <person name="Brown S.D.M."/>
            <person name="Balkany T."/>
            <person name="Liu X.Z."/>
        </authorList>
    </citation>
    <scope>VARIANTS USH1D THR-366; ALA-1209; GLN-1507; TRP-3189 AND PHE-3245</scope>
</reference>
<reference key="14">
    <citation type="journal article" date="2005" name="Hum. Mol. Genet.">
        <title>Digenic inheritance of deafness caused by mutations in genes encoding cadherin 23 and protocadherin 15 in mice and humans.</title>
        <authorList>
            <person name="Zheng Q.Y."/>
            <person name="Yan D."/>
            <person name="Ouyang X.M."/>
            <person name="Du L.L."/>
            <person name="Yu H."/>
            <person name="Chang B."/>
            <person name="Johnson K.R."/>
            <person name="Liu X.Z."/>
        </authorList>
    </citation>
    <scope>VARIANT USH1DF TRP-3189</scope>
</reference>
<reference key="15">
    <citation type="journal article" date="2005" name="N. Engl. J. Med.">
        <title>Modification of human hearing loss by plasma-membrane calcium pump PMCA2.</title>
        <authorList>
            <person name="Schultz J.M."/>
            <person name="Yang Y."/>
            <person name="Caride A.J."/>
            <person name="Filoteo A.G."/>
            <person name="Penheiter A.R."/>
            <person name="Lagziel A."/>
            <person name="Morell R.J."/>
            <person name="Mohiddin S.A."/>
            <person name="Fananapazir L."/>
            <person name="Madeo A.C."/>
            <person name="Penniston J.T."/>
            <person name="Griffith A.J."/>
        </authorList>
    </citation>
    <scope>VARIANT DFNB12 SER-1888</scope>
</reference>
<reference key="16">
    <citation type="journal article" date="2005" name="N. Engl. J. Med.">
        <authorList>
            <person name="Schultz J.M."/>
            <person name="Yang Y."/>
            <person name="Caride A.J."/>
            <person name="Filoteo A.G."/>
            <person name="Penheiter A.R."/>
            <person name="Lagziel A."/>
            <person name="Morell R.J."/>
            <person name="Mohiddin S.A."/>
            <person name="Fananapazir L."/>
            <person name="Madeo A.C."/>
            <person name="Penniston J.T."/>
            <person name="Griffith A.J."/>
        </authorList>
    </citation>
    <scope>ERRATUM OF PUBMED:15829536</scope>
</reference>
<reference key="17">
    <citation type="journal article" date="2006" name="J. Med. Genet.">
        <title>Survey of the frequency of USH1 gene mutations in a cohort of Usher patients shows the importance of cadherin 23 and protocadherin 15 genes and establishes a detection rate of above 90%.</title>
        <authorList>
            <person name="Roux A.-F."/>
            <person name="Faugere V."/>
            <person name="Le Guedard S."/>
            <person name="Pallares-Ruiz N."/>
            <person name="Vielle A."/>
            <person name="Chambert S."/>
            <person name="Marlin S."/>
            <person name="Hamel C."/>
            <person name="Gilbert B."/>
            <person name="Malcolm S."/>
            <person name="Claustres M."/>
        </authorList>
    </citation>
    <scope>VARIANTS USH1D LYS-247 AND SER-2017</scope>
    <scope>VARIANT DFNB12 TRP-1060</scope>
    <scope>FUNCTION</scope>
</reference>
<reference key="18">
    <citation type="journal article" date="2007" name="Clin. Genet.">
        <title>Distribution and frequencies of CDH23 mutations in Japanese patients with non-syndromic hearing loss.</title>
        <authorList>
            <person name="Wagatsuma M."/>
            <person name="Kitoh R."/>
            <person name="Suzuki H."/>
            <person name="Fukuoka H."/>
            <person name="Takumi Y."/>
            <person name="Usami S."/>
        </authorList>
    </citation>
    <scope>VARIANTS DFNB12 LEU-240; GLN-301; PRO-1716 AND TRP-2029</scope>
    <scope>VARIANTS TRP-1417; ILE-1711; MET-1807; ASN-1876; ILE-1908; CYS-2171; PRO-2227; ILE-2283; PRO-2473; HIS-2489; VAL-2669; VAL-2801 AND CYS-3175</scope>
</reference>
<reference key="19">
    <citation type="journal article" date="2007" name="Proc. Natl. Acad. Sci. U.S.A.">
        <title>A functional study of plasma-membrane calcium-pump isoform 2 mutants causing digenic deafness.</title>
        <authorList>
            <person name="Ficarella R."/>
            <person name="Di Leva F."/>
            <person name="Bortolozzi M."/>
            <person name="Ortolano S."/>
            <person name="Donaudy F."/>
            <person name="Petrillo M."/>
            <person name="Melchionda S."/>
            <person name="Lelli A."/>
            <person name="Domi T."/>
            <person name="Fedrizzi L."/>
            <person name="Lim D."/>
            <person name="Shull G.E."/>
            <person name="Gasparini P."/>
            <person name="Brini M."/>
            <person name="Mammano F."/>
            <person name="Carafoli E."/>
        </authorList>
    </citation>
    <scope>INVOLVEMENT IN DFNB12</scope>
    <scope>VARIANT SER-1999</scope>
</reference>
<reference key="20">
    <citation type="journal article" date="2008" name="Hum. Mutat.">
        <title>Mutation profile of the CDH23 gene in 56 probands with Usher syndrome type I.</title>
        <authorList>
            <person name="Oshima A."/>
            <person name="Jaijo T."/>
            <person name="Aller E."/>
            <person name="Millan J.M."/>
            <person name="Carney C."/>
            <person name="Usami S."/>
            <person name="Moller C."/>
            <person name="Kimberling W.J."/>
        </authorList>
    </citation>
    <scope>VARIANTS USH1D THR-366; TYR-755; ILE-1090; SER-1098; HIS-1496; LEU-1788; TRP-1912; ASN-1930; SER-2017; VAL-2376; ILE-2530; SER-2771 AND ALA-2968</scope>
    <scope>VARIANTS ALA-490; ASN-496; ILE-746; GLY-944; LYS-960; THR-1222; GLN-1236; SER-1282; CYS-1349; ASP-1351; GLN-1437; MET-1520; THR-1574; ILE-1675; SER-1999; ILE-2283; LEU-2380; GLN-2588 AND LEU-3125</scope>
</reference>
<reference key="21">
    <citation type="journal article" date="2012" name="PLoS ONE">
        <title>Prevalence and clinical features of hearing loss patients with CDH23 mutations: a large cohort study.</title>
        <authorList>
            <person name="Miyagawa M."/>
            <person name="Nishio S.Y."/>
            <person name="Usami S."/>
        </authorList>
    </citation>
    <scope>VARIANTS DFNB12 LEU-240; GLN-301; LYS-956; MET-1368; TRP-1417; ALA-1626; PRO-1716; TRP-2029; LYS-2287 AND LYS-2438</scope>
    <scope>VARIANTS ASN-160; ILE-803; ILE-1415; GLY-1443; TRP-1588; ILE-1711; MET-1807; ASN-1876; ILE-1908; VAL-2130; CYS-2171; PRO-2227; PRO-2473; VAL-2669; VAL-2801; SER-2912 AND CYS-3175</scope>
</reference>
<reference key="22">
    <citation type="journal article" date="2014" name="BMC Med. Genet.">
        <title>Identification of CDH23 mutations in Korean families with hearing loss by whole-exome sequencing.</title>
        <authorList>
            <person name="Woo H.M."/>
            <person name="Park H.J."/>
            <person name="Park M.H."/>
            <person name="Kim B.Y."/>
            <person name="Shin J.W."/>
            <person name="Yoo W.G."/>
            <person name="Koo S.K."/>
        </authorList>
    </citation>
    <scope>VARIANTS DFNB12 LEU-240; SER-342 AND LYS-1595</scope>
    <scope>VARIANTS SER-361; MET-424; ASN-428; ALA-490; ASN-496; GLN-964; HIS-1010; SER-1118; ALA-1335; ASP-1351; GLN-1437; THR-1575; TRP-1588; ILE-1675; GLN-1804; GLU-1806; SER-1999; LYS-2044; ILE-2283; GLN-2358; LEU-2380; VAL-2531; VAL-2801; THR-3080 AND LEU-3125</scope>
</reference>
<reference key="23">
    <citation type="journal article" date="2014" name="Hum. Mol. Genet.">
        <title>New syndrome with retinitis pigmentosa is caused by nonsense mutations in retinol dehydrogenase RDH11.</title>
        <authorList>
            <person name="Xie Y.A."/>
            <person name="Lee W."/>
            <person name="Cai C."/>
            <person name="Gambin T."/>
            <person name="Noupuu K."/>
            <person name="Sujirakul T."/>
            <person name="Ayuso C."/>
            <person name="Jhangiani S."/>
            <person name="Muzny D."/>
            <person name="Boerwinkle E."/>
            <person name="Gibbs R."/>
            <person name="Greenstein V.C."/>
            <person name="Lupski J.R."/>
            <person name="Tsang S.H."/>
            <person name="Allikmets R."/>
        </authorList>
    </citation>
    <scope>VARIANTS GLN-192 AND THR-3062</scope>
</reference>
<reference key="24">
    <citation type="journal article" date="2017" name="Am. J. Hum. Genet.">
        <title>Germline mutations in CDH23, encoding cadherin-related 23, are associated with both familial and sporadic pituitary adenomas.</title>
        <authorList>
            <person name="Zhang Q."/>
            <person name="Peng C."/>
            <person name="Song J."/>
            <person name="Zhang Y."/>
            <person name="Chen J."/>
            <person name="Song Z."/>
            <person name="Shou X."/>
            <person name="Ma Z."/>
            <person name="Peng H."/>
            <person name="Jian X."/>
            <person name="He W."/>
            <person name="Ye Z."/>
            <person name="Li Z."/>
            <person name="Wang Y."/>
            <person name="Ye H."/>
            <person name="Zhang Z."/>
            <person name="Shen M."/>
            <person name="Tang F."/>
            <person name="Chen H."/>
            <person name="Shi Z."/>
            <person name="Chen C."/>
            <person name="Chen Z."/>
            <person name="Shen Y."/>
            <person name="Wang Y."/>
            <person name="Lu S."/>
            <person name="Zhang J."/>
            <person name="Li Y."/>
            <person name="Li S."/>
            <person name="Mao Y."/>
            <person name="Zhou L."/>
            <person name="Yan H."/>
            <person name="Shi Y."/>
            <person name="Huang C."/>
            <person name="Zhao Y."/>
        </authorList>
    </citation>
    <scope>VARIANTS PITA5 LEU-1379; HIS-2115; TRP-3138 AND ASN-3296</scope>
</reference>
<reference key="25">
    <citation type="journal article" date="2017" name="Hum. Mutat.">
        <title>Mutations in KARS cause early-onset hearing loss and leukoencephalopathy: Potential pathogenic mechanism.</title>
        <authorList>
            <person name="Zhou X.L."/>
            <person name="He L.X."/>
            <person name="Yu L.J."/>
            <person name="Wang Y."/>
            <person name="Wang X.J."/>
            <person name="Wang E.D."/>
            <person name="Yang T."/>
        </authorList>
    </citation>
    <scope>VARIANTS ILE-187 AND GLU-1806</scope>
</reference>
<gene>
    <name evidence="25 33" type="primary">CDH23</name>
    <name evidence="26" type="synonym">KIAA1774</name>
    <name evidence="26" type="synonym">KIAA1812</name>
    <name evidence="28" type="ORF">UNQ1894/PRO4340</name>
</gene>